<reference key="1">
    <citation type="journal article" date="1991" name="Cell Regul.">
        <title>Molecular cloning of a second form of rac protein kinase.</title>
        <authorList>
            <person name="Jones P.F."/>
            <person name="Jakubowicz T."/>
            <person name="Hemmings B.A."/>
        </authorList>
    </citation>
    <scope>NUCLEOTIDE SEQUENCE [MRNA] (ISOFORM 1)</scope>
    <source>
        <tissue>Epithelium</tissue>
    </source>
</reference>
<reference key="2">
    <citation type="journal article" date="1992" name="Proc. Natl. Acad. Sci. U.S.A.">
        <title>AKT2, a putative oncogene encoding a member of a subfamily of protein-serine/threonine kinases, is amplified in human ovarian carcinomas.</title>
        <authorList>
            <person name="Cheng J.Q."/>
            <person name="Godwin A.K."/>
            <person name="Bellacosa A."/>
            <person name="Taguchi T."/>
            <person name="Franke T.F."/>
            <person name="Hamilton T.C."/>
            <person name="Tsichlis P.N."/>
            <person name="Testa J.R."/>
        </authorList>
    </citation>
    <scope>NUCLEOTIDE SEQUENCE [MRNA] (ISOFORM 1)</scope>
    <source>
        <tissue>Thymus</tissue>
    </source>
</reference>
<reference key="3">
    <citation type="journal article" date="2004" name="Nat. Genet.">
        <title>Complete sequencing and characterization of 21,243 full-length human cDNAs.</title>
        <authorList>
            <person name="Ota T."/>
            <person name="Suzuki Y."/>
            <person name="Nishikawa T."/>
            <person name="Otsuki T."/>
            <person name="Sugiyama T."/>
            <person name="Irie R."/>
            <person name="Wakamatsu A."/>
            <person name="Hayashi K."/>
            <person name="Sato H."/>
            <person name="Nagai K."/>
            <person name="Kimura K."/>
            <person name="Makita H."/>
            <person name="Sekine M."/>
            <person name="Obayashi M."/>
            <person name="Nishi T."/>
            <person name="Shibahara T."/>
            <person name="Tanaka T."/>
            <person name="Ishii S."/>
            <person name="Yamamoto J."/>
            <person name="Saito K."/>
            <person name="Kawai Y."/>
            <person name="Isono Y."/>
            <person name="Nakamura Y."/>
            <person name="Nagahari K."/>
            <person name="Murakami K."/>
            <person name="Yasuda T."/>
            <person name="Iwayanagi T."/>
            <person name="Wagatsuma M."/>
            <person name="Shiratori A."/>
            <person name="Sudo H."/>
            <person name="Hosoiri T."/>
            <person name="Kaku Y."/>
            <person name="Kodaira H."/>
            <person name="Kondo H."/>
            <person name="Sugawara M."/>
            <person name="Takahashi M."/>
            <person name="Kanda K."/>
            <person name="Yokoi T."/>
            <person name="Furuya T."/>
            <person name="Kikkawa E."/>
            <person name="Omura Y."/>
            <person name="Abe K."/>
            <person name="Kamihara K."/>
            <person name="Katsuta N."/>
            <person name="Sato K."/>
            <person name="Tanikawa M."/>
            <person name="Yamazaki M."/>
            <person name="Ninomiya K."/>
            <person name="Ishibashi T."/>
            <person name="Yamashita H."/>
            <person name="Murakawa K."/>
            <person name="Fujimori K."/>
            <person name="Tanai H."/>
            <person name="Kimata M."/>
            <person name="Watanabe M."/>
            <person name="Hiraoka S."/>
            <person name="Chiba Y."/>
            <person name="Ishida S."/>
            <person name="Ono Y."/>
            <person name="Takiguchi S."/>
            <person name="Watanabe S."/>
            <person name="Yosida M."/>
            <person name="Hotuta T."/>
            <person name="Kusano J."/>
            <person name="Kanehori K."/>
            <person name="Takahashi-Fujii A."/>
            <person name="Hara H."/>
            <person name="Tanase T.-O."/>
            <person name="Nomura Y."/>
            <person name="Togiya S."/>
            <person name="Komai F."/>
            <person name="Hara R."/>
            <person name="Takeuchi K."/>
            <person name="Arita M."/>
            <person name="Imose N."/>
            <person name="Musashino K."/>
            <person name="Yuuki H."/>
            <person name="Oshima A."/>
            <person name="Sasaki N."/>
            <person name="Aotsuka S."/>
            <person name="Yoshikawa Y."/>
            <person name="Matsunawa H."/>
            <person name="Ichihara T."/>
            <person name="Shiohata N."/>
            <person name="Sano S."/>
            <person name="Moriya S."/>
            <person name="Momiyama H."/>
            <person name="Satoh N."/>
            <person name="Takami S."/>
            <person name="Terashima Y."/>
            <person name="Suzuki O."/>
            <person name="Nakagawa S."/>
            <person name="Senoh A."/>
            <person name="Mizoguchi H."/>
            <person name="Goto Y."/>
            <person name="Shimizu F."/>
            <person name="Wakebe H."/>
            <person name="Hishigaki H."/>
            <person name="Watanabe T."/>
            <person name="Sugiyama A."/>
            <person name="Takemoto M."/>
            <person name="Kawakami B."/>
            <person name="Yamazaki M."/>
            <person name="Watanabe K."/>
            <person name="Kumagai A."/>
            <person name="Itakura S."/>
            <person name="Fukuzumi Y."/>
            <person name="Fujimori Y."/>
            <person name="Komiyama M."/>
            <person name="Tashiro H."/>
            <person name="Tanigami A."/>
            <person name="Fujiwara T."/>
            <person name="Ono T."/>
            <person name="Yamada K."/>
            <person name="Fujii Y."/>
            <person name="Ozaki K."/>
            <person name="Hirao M."/>
            <person name="Ohmori Y."/>
            <person name="Kawabata A."/>
            <person name="Hikiji T."/>
            <person name="Kobatake N."/>
            <person name="Inagaki H."/>
            <person name="Ikema Y."/>
            <person name="Okamoto S."/>
            <person name="Okitani R."/>
            <person name="Kawakami T."/>
            <person name="Noguchi S."/>
            <person name="Itoh T."/>
            <person name="Shigeta K."/>
            <person name="Senba T."/>
            <person name="Matsumura K."/>
            <person name="Nakajima Y."/>
            <person name="Mizuno T."/>
            <person name="Morinaga M."/>
            <person name="Sasaki M."/>
            <person name="Togashi T."/>
            <person name="Oyama M."/>
            <person name="Hata H."/>
            <person name="Watanabe M."/>
            <person name="Komatsu T."/>
            <person name="Mizushima-Sugano J."/>
            <person name="Satoh T."/>
            <person name="Shirai Y."/>
            <person name="Takahashi Y."/>
            <person name="Nakagawa K."/>
            <person name="Okumura K."/>
            <person name="Nagase T."/>
            <person name="Nomura N."/>
            <person name="Kikuchi H."/>
            <person name="Masuho Y."/>
            <person name="Yamashita R."/>
            <person name="Nakai K."/>
            <person name="Yada T."/>
            <person name="Nakamura Y."/>
            <person name="Ohara O."/>
            <person name="Isogai T."/>
            <person name="Sugano S."/>
        </authorList>
    </citation>
    <scope>NUCLEOTIDE SEQUENCE [LARGE SCALE MRNA] (ISOFORM 1)</scope>
    <source>
        <tissue>Placenta</tissue>
    </source>
</reference>
<reference key="4">
    <citation type="journal article" date="2004" name="Nature">
        <title>The DNA sequence and biology of human chromosome 19.</title>
        <authorList>
            <person name="Grimwood J."/>
            <person name="Gordon L.A."/>
            <person name="Olsen A.S."/>
            <person name="Terry A."/>
            <person name="Schmutz J."/>
            <person name="Lamerdin J.E."/>
            <person name="Hellsten U."/>
            <person name="Goodstein D."/>
            <person name="Couronne O."/>
            <person name="Tran-Gyamfi M."/>
            <person name="Aerts A."/>
            <person name="Altherr M."/>
            <person name="Ashworth L."/>
            <person name="Bajorek E."/>
            <person name="Black S."/>
            <person name="Branscomb E."/>
            <person name="Caenepeel S."/>
            <person name="Carrano A.V."/>
            <person name="Caoile C."/>
            <person name="Chan Y.M."/>
            <person name="Christensen M."/>
            <person name="Cleland C.A."/>
            <person name="Copeland A."/>
            <person name="Dalin E."/>
            <person name="Dehal P."/>
            <person name="Denys M."/>
            <person name="Detter J.C."/>
            <person name="Escobar J."/>
            <person name="Flowers D."/>
            <person name="Fotopulos D."/>
            <person name="Garcia C."/>
            <person name="Georgescu A.M."/>
            <person name="Glavina T."/>
            <person name="Gomez M."/>
            <person name="Gonzales E."/>
            <person name="Groza M."/>
            <person name="Hammon N."/>
            <person name="Hawkins T."/>
            <person name="Haydu L."/>
            <person name="Ho I."/>
            <person name="Huang W."/>
            <person name="Israni S."/>
            <person name="Jett J."/>
            <person name="Kadner K."/>
            <person name="Kimball H."/>
            <person name="Kobayashi A."/>
            <person name="Larionov V."/>
            <person name="Leem S.-H."/>
            <person name="Lopez F."/>
            <person name="Lou Y."/>
            <person name="Lowry S."/>
            <person name="Malfatti S."/>
            <person name="Martinez D."/>
            <person name="McCready P.M."/>
            <person name="Medina C."/>
            <person name="Morgan J."/>
            <person name="Nelson K."/>
            <person name="Nolan M."/>
            <person name="Ovcharenko I."/>
            <person name="Pitluck S."/>
            <person name="Pollard M."/>
            <person name="Popkie A.P."/>
            <person name="Predki P."/>
            <person name="Quan G."/>
            <person name="Ramirez L."/>
            <person name="Rash S."/>
            <person name="Retterer J."/>
            <person name="Rodriguez A."/>
            <person name="Rogers S."/>
            <person name="Salamov A."/>
            <person name="Salazar A."/>
            <person name="She X."/>
            <person name="Smith D."/>
            <person name="Slezak T."/>
            <person name="Solovyev V."/>
            <person name="Thayer N."/>
            <person name="Tice H."/>
            <person name="Tsai M."/>
            <person name="Ustaszewska A."/>
            <person name="Vo N."/>
            <person name="Wagner M."/>
            <person name="Wheeler J."/>
            <person name="Wu K."/>
            <person name="Xie G."/>
            <person name="Yang J."/>
            <person name="Dubchak I."/>
            <person name="Furey T.S."/>
            <person name="DeJong P."/>
            <person name="Dickson M."/>
            <person name="Gordon D."/>
            <person name="Eichler E.E."/>
            <person name="Pennacchio L.A."/>
            <person name="Richardson P."/>
            <person name="Stubbs L."/>
            <person name="Rokhsar D.S."/>
            <person name="Myers R.M."/>
            <person name="Rubin E.M."/>
            <person name="Lucas S.M."/>
        </authorList>
    </citation>
    <scope>NUCLEOTIDE SEQUENCE [LARGE SCALE GENOMIC DNA]</scope>
</reference>
<reference key="5">
    <citation type="journal article" date="2004" name="Genome Res.">
        <title>The status, quality, and expansion of the NIH full-length cDNA project: the Mammalian Gene Collection (MGC).</title>
        <authorList>
            <consortium name="The MGC Project Team"/>
        </authorList>
    </citation>
    <scope>NUCLEOTIDE SEQUENCE [LARGE SCALE MRNA] (ISOFORMS 1 AND 2)</scope>
    <source>
        <tissue>Lymph</tissue>
    </source>
</reference>
<reference key="6">
    <citation type="submission" date="2004-08" db="EMBL/GenBank/DDBJ databases">
        <authorList>
            <consortium name="NIEHS SNPs program"/>
        </authorList>
    </citation>
    <scope>NUCLEOTIDE SEQUENCE [GENOMIC DNA] OF 237-277</scope>
</reference>
<reference key="7">
    <citation type="journal article" date="1998" name="Biochem. J.">
        <title>Activation of protein kinase B beta and gamma isoforms by insulin in vivo and by 3-phosphoinositide-dependent protein kinase-1 in vitro: comparison with protein kinase B alpha.</title>
        <authorList>
            <person name="Walker K.S."/>
            <person name="Deak M."/>
            <person name="Paterson A."/>
            <person name="Hudson K."/>
            <person name="Cohen P."/>
            <person name="Alessi D.R."/>
        </authorList>
    </citation>
    <scope>CATALYTIC ACTIVITY</scope>
    <scope>PHOSPHORYLATION AT THR-309 BY PDPK1</scope>
</reference>
<reference key="8">
    <citation type="journal article" date="2000" name="Mol. Cell">
        <title>The protooncogene TCL1 is an Akt kinase coactivator.</title>
        <authorList>
            <person name="Laine J."/>
            <person name="Kuenstle G."/>
            <person name="Obata T."/>
            <person name="Sha M."/>
            <person name="Noguchi M."/>
        </authorList>
    </citation>
    <scope>INTERACTION WITH MTCP1; TCL1A AND TCL1B</scope>
</reference>
<reference key="9">
    <citation type="journal article" date="2005" name="Biochim. Biophys. Acta">
        <title>Activation of a GST-tagged AKT2/PKBbeta.</title>
        <authorList>
            <person name="Baer K."/>
            <person name="Lisinski I."/>
            <person name="Gompert M."/>
            <person name="Stuhlmann D."/>
            <person name="Schmolz K."/>
            <person name="Klein H.W."/>
            <person name="Al-Hasani H."/>
        </authorList>
    </citation>
    <scope>MUTAGENESIS OF LYS-181; THR-309 AND SER-474</scope>
    <scope>PHOSPHORYLATION AT THR-309 AND SER-474</scope>
    <scope>BIOPHYSICOCHEMICAL PROPERTIES</scope>
</reference>
<reference key="10">
    <citation type="journal article" date="2006" name="Biochem. J.">
        <title>A WD-FYVE protein binds to the kinases Akt and PKCzeta/lambda.</title>
        <authorList>
            <person name="Fritzius T."/>
            <person name="Burkard G."/>
            <person name="Haas E."/>
            <person name="Heinrich J."/>
            <person name="Schweneker M."/>
            <person name="Bosse M."/>
            <person name="Zimmermann S."/>
            <person name="Frey A.D."/>
            <person name="Caelers A."/>
            <person name="Bachmann A.S."/>
            <person name="Moelling K."/>
        </authorList>
    </citation>
    <scope>INTERACTION WITH WDFY2</scope>
</reference>
<reference key="11">
    <citation type="journal article" date="2006" name="J. Biol. Chem.">
        <title>Kinetic mechanism of AKT/PKB enzyme family.</title>
        <authorList>
            <person name="Zhang X."/>
            <person name="Zhang S."/>
            <person name="Yamane H."/>
            <person name="Wahl R."/>
            <person name="Ali A."/>
            <person name="Lofgren J.A."/>
            <person name="Kendall R.L."/>
        </authorList>
    </citation>
    <scope>BIOPHYSICOCHEMICAL PROPERTIES</scope>
</reference>
<reference key="12">
    <citation type="journal article" date="2008" name="J. Cell. Physiol.">
        <title>Akt2 is implicated in skeletal muscle differentiation and specifically binds Prohibitin2/REA.</title>
        <authorList>
            <person name="Heron-Milhavet L."/>
            <person name="Mamaeva D."/>
            <person name="Rochat A."/>
            <person name="Lamb N.J."/>
            <person name="Fernandez A."/>
        </authorList>
    </citation>
    <scope>SUBCELLULAR LOCATION</scope>
    <scope>TISSUE SPECIFICITY</scope>
    <scope>DEVELOPMENTAL STAGE</scope>
</reference>
<reference key="13">
    <citation type="journal article" date="2008" name="Proc. Natl. Acad. Sci. U.S.A.">
        <title>A quantitative atlas of mitotic phosphorylation.</title>
        <authorList>
            <person name="Dephoure N."/>
            <person name="Zhou C."/>
            <person name="Villen J."/>
            <person name="Beausoleil S.A."/>
            <person name="Bakalarski C.E."/>
            <person name="Elledge S.J."/>
            <person name="Gygi S.P."/>
        </authorList>
    </citation>
    <scope>PHOSPHORYLATION [LARGE SCALE ANALYSIS] AT SER-126</scope>
    <scope>IDENTIFICATION BY MASS SPECTROMETRY [LARGE SCALE ANALYSIS]</scope>
    <source>
        <tissue>Cervix carcinoma</tissue>
    </source>
</reference>
<reference key="14">
    <citation type="journal article" date="2009" name="Dev. Cell">
        <title>The E3 ligase TTC3 facilitates ubiquitination and degradation of phosphorylated Akt.</title>
        <authorList>
            <person name="Suizu F."/>
            <person name="Hiramuki Y."/>
            <person name="Okumura F."/>
            <person name="Matsuda M."/>
            <person name="Okumura A.J."/>
            <person name="Hirata N."/>
            <person name="Narita M."/>
            <person name="Kohno T."/>
            <person name="Yokota J."/>
            <person name="Bohgaki M."/>
            <person name="Obuse C."/>
            <person name="Hatakeyama S."/>
            <person name="Obata T."/>
            <person name="Noguchi M."/>
        </authorList>
    </citation>
    <scope>UBIQUITINATION BY TTC3</scope>
    <scope>PHOSPHORYLATION AT THR-309 AND SER-474</scope>
    <scope>MUTAGENESIS OF THR-309 AND SER-474</scope>
</reference>
<reference key="15">
    <citation type="journal article" date="2009" name="Sci. Signal.">
        <title>Quantitative phosphoproteomic analysis of T cell receptor signaling reveals system-wide modulation of protein-protein interactions.</title>
        <authorList>
            <person name="Mayya V."/>
            <person name="Lundgren D.H."/>
            <person name="Hwang S.-I."/>
            <person name="Rezaul K."/>
            <person name="Wu L."/>
            <person name="Eng J.K."/>
            <person name="Rodionov V."/>
            <person name="Han D.K."/>
        </authorList>
    </citation>
    <scope>PHOSPHORYLATION [LARGE SCALE ANALYSIS] AT SER-447; THR-451; SER-474 AND SER-478</scope>
    <scope>IDENTIFICATION BY MASS SPECTROMETRY [LARGE SCALE ANALYSIS]</scope>
    <source>
        <tissue>Leukemic T-cell</tissue>
    </source>
</reference>
<reference key="16">
    <citation type="journal article" date="2009" name="Science">
        <title>The E3 ligase TRAF6 regulates Akt ubiquitination and activation.</title>
        <authorList>
            <person name="Yang W.-L."/>
            <person name="Wang J."/>
            <person name="Chan C.-H."/>
            <person name="Lee S.-W."/>
            <person name="Campos A.D."/>
            <person name="Lamothe B."/>
            <person name="Hur L."/>
            <person name="Grabiner B.C."/>
            <person name="Lin X."/>
            <person name="Darnay B.G."/>
            <person name="Lin H.-K."/>
        </authorList>
    </citation>
    <scope>UBIQUITINATION BY TRAF6</scope>
</reference>
<reference key="17">
    <citation type="journal article" date="2010" name="Neuro-oncol.">
        <title>Akt2 and Akt3 play a pivotal role in malignant gliomas.</title>
        <authorList>
            <person name="Mure H."/>
            <person name="Matsuzaki K."/>
            <person name="Kitazato K.T."/>
            <person name="Mizobuchi Y."/>
            <person name="Kuwayama K."/>
            <person name="Kageji T."/>
            <person name="Nagahiro S."/>
        </authorList>
    </citation>
    <scope>INVOLVEMENT IN GLIOBLASTOMA</scope>
</reference>
<reference key="18">
    <citation type="journal article" date="2011" name="BMC Syst. Biol.">
        <title>Initial characterization of the human central proteome.</title>
        <authorList>
            <person name="Burkard T.R."/>
            <person name="Planyavsky M."/>
            <person name="Kaupe I."/>
            <person name="Breitwieser F.P."/>
            <person name="Buerckstuemmer T."/>
            <person name="Bennett K.L."/>
            <person name="Superti-Furga G."/>
            <person name="Colinge J."/>
        </authorList>
    </citation>
    <scope>IDENTIFICATION BY MASS SPECTROMETRY [LARGE SCALE ANALYSIS]</scope>
</reference>
<reference key="19">
    <citation type="journal article" date="2011" name="Cell. Signal.">
        <title>Akt signalling in health and disease.</title>
        <authorList>
            <person name="Hers I."/>
            <person name="Vincent E.E."/>
            <person name="Tavare J.M."/>
        </authorList>
    </citation>
    <scope>REVIEW ON FUNCTION</scope>
</reference>
<reference key="20">
    <citation type="journal article" date="2011" name="Histol. Histopathol.">
        <title>Akt1 and Akt2: differentiating the aktion.</title>
        <authorList>
            <person name="Heron-Milhavet L."/>
            <person name="Khouya N."/>
            <person name="Fernandez A."/>
            <person name="Lamb N.J."/>
        </authorList>
    </citation>
    <scope>REVIEW ON FUNCTION</scope>
</reference>
<reference key="21">
    <citation type="journal article" date="2012" name="Mol. Cell. Proteomics">
        <title>Comparative large-scale characterisation of plant vs. mammal proteins reveals similar and idiosyncratic N-alpha acetylation features.</title>
        <authorList>
            <person name="Bienvenut W.V."/>
            <person name="Sumpton D."/>
            <person name="Martinez A."/>
            <person name="Lilla S."/>
            <person name="Espagne C."/>
            <person name="Meinnel T."/>
            <person name="Giglione C."/>
        </authorList>
    </citation>
    <scope>ACETYLATION [LARGE SCALE ANALYSIS] AT MET-1</scope>
    <scope>IDENTIFICATION BY MASS SPECTROMETRY [LARGE SCALE ANALYSIS]</scope>
</reference>
<reference key="22">
    <citation type="journal article" date="2013" name="J. Cell Sci.">
        <title>Insulin signaling via Akt2 switches plakophilin 1 function from stabilizing cell adhesion to promoting cell proliferation.</title>
        <authorList>
            <person name="Wolf A."/>
            <person name="Rietscher K."/>
            <person name="Glass M."/>
            <person name="Huettelmaier S."/>
            <person name="Schutkowski M."/>
            <person name="Ihling C."/>
            <person name="Sinz A."/>
            <person name="Wingenfeld A."/>
            <person name="Mun A."/>
            <person name="Hatzfeld M."/>
        </authorList>
    </citation>
    <scope>FUNCTION</scope>
    <scope>CATALYTIC ACTIVITY</scope>
    <scope>ACTIVITY REGULATION</scope>
    <scope>SUBCELLULAR LOCATION</scope>
</reference>
<reference key="23">
    <citation type="journal article" date="2013" name="J. Proteome Res.">
        <title>Toward a comprehensive characterization of a human cancer cell phosphoproteome.</title>
        <authorList>
            <person name="Zhou H."/>
            <person name="Di Palma S."/>
            <person name="Preisinger C."/>
            <person name="Peng M."/>
            <person name="Polat A.N."/>
            <person name="Heck A.J."/>
            <person name="Mohammed S."/>
        </authorList>
    </citation>
    <scope>PHOSPHORYLATION [LARGE SCALE ANALYSIS] AT SER-34 AND SER-126</scope>
    <scope>IDENTIFICATION BY MASS SPECTROMETRY [LARGE SCALE ANALYSIS]</scope>
    <source>
        <tissue>Cervix carcinoma</tissue>
        <tissue>Erythroleukemia</tissue>
    </source>
</reference>
<reference key="24">
    <citation type="journal article" date="2014" name="J. Proteomics">
        <title>An enzyme assisted RP-RPLC approach for in-depth analysis of human liver phosphoproteome.</title>
        <authorList>
            <person name="Bian Y."/>
            <person name="Song C."/>
            <person name="Cheng K."/>
            <person name="Dong M."/>
            <person name="Wang F."/>
            <person name="Huang J."/>
            <person name="Sun D."/>
            <person name="Wang L."/>
            <person name="Ye M."/>
            <person name="Zou H."/>
        </authorList>
    </citation>
    <scope>PHOSPHORYLATION [LARGE SCALE ANALYSIS] AT SER-34 AND THR-451</scope>
    <scope>IDENTIFICATION BY MASS SPECTROMETRY [LARGE SCALE ANALYSIS]</scope>
    <source>
        <tissue>Liver</tissue>
    </source>
</reference>
<reference key="25">
    <citation type="journal article" date="2019" name="Dev. Cell">
        <title>Akt Regulates a Rab11-Effector Switch Required for Ciliogenesis.</title>
        <authorList>
            <person name="Walia V."/>
            <person name="Cuenca A."/>
            <person name="Vetter M."/>
            <person name="Insinna C."/>
            <person name="Perera S."/>
            <person name="Lu Q."/>
            <person name="Ritt D.A."/>
            <person name="Semler E."/>
            <person name="Specht S."/>
            <person name="Stauffer J."/>
            <person name="Morrison D.K."/>
            <person name="Lorentzen E."/>
            <person name="Westlake C.J."/>
        </authorList>
    </citation>
    <scope>FUNCTION</scope>
</reference>
<reference key="26">
    <citation type="journal article" date="2002" name="Mol. Cell">
        <title>Molecular mechanism for the regulation of protein kinase B/Akt by hydrophobic motif phosphorylation.</title>
        <authorList>
            <person name="Yang J."/>
            <person name="Cron P."/>
            <person name="Thompson V."/>
            <person name="Good V.M."/>
            <person name="Hess D."/>
            <person name="Hemmings B.A."/>
            <person name="Barford D."/>
        </authorList>
    </citation>
    <scope>X-RAY CRYSTALLOGRAPHY (2.3 ANGSTROMS) OF 146-480</scope>
    <scope>ACTIVATION BY PHOSPHORYLATION AT THR-309 AND SER-474</scope>
</reference>
<reference key="27">
    <citation type="journal article" date="2002" name="Nat. Struct. Biol.">
        <title>Crystal structure of an activated Akt/protein kinase B ternary complex with GSK3-peptide and AMP-PNP.</title>
        <authorList>
            <person name="Yang J."/>
            <person name="Cron P."/>
            <person name="Good V.M."/>
            <person name="Thompson V."/>
            <person name="Hemmings B.A."/>
            <person name="Barford D."/>
        </authorList>
    </citation>
    <scope>X-RAY CRYSTALLOGRAPHY (1.60 ANGSTROMS) OF 146-467 IN COMPLEX WITH PHOSPHOAMINOPHOSPHONIC ACID-ADENYLATE ESTER AND MANGANESE</scope>
    <scope>PHOSPHORYLATION AT THR-309</scope>
</reference>
<reference key="28">
    <citation type="journal article" date="2003" name="Structure">
        <title>Crystal structure of an inactive Akt2 kinase domain.</title>
        <authorList>
            <person name="Huang X."/>
            <person name="Begley M."/>
            <person name="Morgenstern K.A."/>
            <person name="Gu Y."/>
            <person name="Rose P."/>
            <person name="Zhao H."/>
            <person name="Zhu X."/>
        </authorList>
    </citation>
    <scope>X-RAY CRYSTALLOGRAPHY (2.8 ANGSTROMS) OF 143-481</scope>
    <scope>ATP-BINDING</scope>
    <scope>SUBSTRATE-BINDING</scope>
    <scope>DISULFIDE BOND</scope>
    <scope>CATALYTIC ACTIVITY</scope>
    <scope>BIOPHYSICOCHEMICAL PROPERTIES</scope>
</reference>
<reference key="29">
    <citation type="journal article" date="2004" name="J. Biomol. NMR">
        <title>Solution structure and backbone dynamics of the pleckstrin homology domain of the human protein kinase B (PKB/Akt). Interaction with inositol phosphates.</title>
        <authorList>
            <person name="Auguin D."/>
            <person name="Barthe P."/>
            <person name="Auge-Senegas M.T."/>
            <person name="Stern M.H."/>
            <person name="Noguchi M."/>
            <person name="Roumestand C."/>
        </authorList>
    </citation>
    <scope>STRUCTURE BY NMR OF 1-111</scope>
</reference>
<reference key="30">
    <citation type="journal article" date="2007" name="J. Mol. Biol.">
        <title>A structural comparison of inhibitor binding to PKB, PKA and PKA-PKB chimera.</title>
        <authorList>
            <person name="Davies T.G."/>
            <person name="Verdonk M.L."/>
            <person name="Graham B."/>
            <person name="Saalau-Bethell S."/>
            <person name="Hamlett C.C."/>
            <person name="McHardy T."/>
            <person name="Collins I."/>
            <person name="Garrett M.D."/>
            <person name="Workman P."/>
            <person name="Woodhead S.J."/>
            <person name="Jhoti H."/>
            <person name="Barford D."/>
        </authorList>
    </citation>
    <scope>X-RAY CRYSTALLOGRAPHY (1.8 ANGSTROMS) OF 146-467</scope>
    <scope>BINDING TO SYNTHETIC INHIBITORS</scope>
</reference>
<reference key="31">
    <citation type="journal article" date="2008" name="J. Med. Chem.">
        <title>Identification of 4-(2-(4-amino-1,2,5-oxadiazol-3-yl)-1-ethyl-7-{[(3S)-3-piperidinylmethyl]oxy}-1H-imidazo[4,5-c]pyridin-4-yl)-2-methyl-3-butyn-2-ol (GSK690693), a novel inhibitor of AKT kinase.</title>
        <authorList>
            <person name="Heerding D.A."/>
            <person name="Rhodes N."/>
            <person name="Leber J.D."/>
            <person name="Clark T.J."/>
            <person name="Keenan R.M."/>
            <person name="Lafrance L.V."/>
            <person name="Li M."/>
            <person name="Safonov I.G."/>
            <person name="Takata D.T."/>
            <person name="Venslavsky J.W."/>
            <person name="Yamashita D.S."/>
            <person name="Choudhry A.E."/>
            <person name="Copeland R.A."/>
            <person name="Lai Z."/>
            <person name="Schaber M.D."/>
            <person name="Tummino P.J."/>
            <person name="Strum S.L."/>
            <person name="Wood E.R."/>
            <person name="Duckett D.R."/>
            <person name="Eberwein D."/>
            <person name="Knick V.B."/>
            <person name="Lansing T.J."/>
            <person name="McConnell R.T."/>
            <person name="Zhang S."/>
            <person name="Minthorn E.A."/>
            <person name="Concha N.O."/>
            <person name="Warren G.L."/>
            <person name="Kumar R."/>
        </authorList>
    </citation>
    <scope>X-RAY CRYSTALLOGRAPHY (2.0 ANGSTROMS) OF 146-480</scope>
    <scope>ACTIVITY REGULATION</scope>
</reference>
<reference evidence="37 38 39" key="32">
    <citation type="journal article" date="2009" name="Bioorg. Med. Chem. Lett.">
        <title>Aminofurazans as potent inhibitors of AKT kinase.</title>
        <authorList>
            <person name="Rouse M.B."/>
            <person name="Seefeld M.A."/>
            <person name="Leber J.D."/>
            <person name="McNulty K.C."/>
            <person name="Sun L."/>
            <person name="Miller W.H."/>
            <person name="Zhang S."/>
            <person name="Minthorn E.A."/>
            <person name="Concha N.O."/>
            <person name="Choudhry A.E."/>
            <person name="Schaber M.D."/>
            <person name="Heerding D.A."/>
        </authorList>
    </citation>
    <scope>X-RAY CRYSTALLOGRAPHY (2.3 ANGSTROMS) OF 146-480</scope>
    <scope>ACTIVITY REGULATION</scope>
</reference>
<reference key="33">
    <citation type="journal article" date="2004" name="Science">
        <title>A family with severe insulin resistance and diabetes due to a mutation in AKT2.</title>
        <authorList>
            <person name="George S."/>
            <person name="Rochford J.J."/>
            <person name="Wolfrum C."/>
            <person name="Gray S.L."/>
            <person name="Schinner S."/>
            <person name="Wilson J.C."/>
            <person name="Soos M.A."/>
            <person name="Murgatroyd P.R."/>
            <person name="Williams R.M."/>
            <person name="Acerini C.L."/>
            <person name="Dunger D.B."/>
            <person name="Barford D."/>
            <person name="Umpleby A.M."/>
            <person name="Wareham N.J."/>
            <person name="Davies H.A."/>
            <person name="Schafer A.J."/>
            <person name="Stoffel M."/>
            <person name="O'Rahilly S."/>
            <person name="Barroso I."/>
        </authorList>
    </citation>
    <scope>VARIANT HIS-274</scope>
    <scope>INVOLVEMENT IN T2D</scope>
</reference>
<reference key="34">
    <citation type="journal article" date="2007" name="Nature">
        <title>Patterns of somatic mutation in human cancer genomes.</title>
        <authorList>
            <person name="Greenman C."/>
            <person name="Stephens P."/>
            <person name="Smith R."/>
            <person name="Dalgliesh G.L."/>
            <person name="Hunter C."/>
            <person name="Bignell G."/>
            <person name="Davies H."/>
            <person name="Teague J."/>
            <person name="Butler A."/>
            <person name="Stevens C."/>
            <person name="Edkins S."/>
            <person name="O'Meara S."/>
            <person name="Vastrik I."/>
            <person name="Schmidt E.E."/>
            <person name="Avis T."/>
            <person name="Barthorpe S."/>
            <person name="Bhamra G."/>
            <person name="Buck G."/>
            <person name="Choudhury B."/>
            <person name="Clements J."/>
            <person name="Cole J."/>
            <person name="Dicks E."/>
            <person name="Forbes S."/>
            <person name="Gray K."/>
            <person name="Halliday K."/>
            <person name="Harrison R."/>
            <person name="Hills K."/>
            <person name="Hinton J."/>
            <person name="Jenkinson A."/>
            <person name="Jones D."/>
            <person name="Menzies A."/>
            <person name="Mironenko T."/>
            <person name="Perry J."/>
            <person name="Raine K."/>
            <person name="Richardson D."/>
            <person name="Shepherd R."/>
            <person name="Small A."/>
            <person name="Tofts C."/>
            <person name="Varian J."/>
            <person name="Webb T."/>
            <person name="West S."/>
            <person name="Widaa S."/>
            <person name="Yates A."/>
            <person name="Cahill D.P."/>
            <person name="Louis D.N."/>
            <person name="Goldstraw P."/>
            <person name="Nicholson A.G."/>
            <person name="Brasseur F."/>
            <person name="Looijenga L."/>
            <person name="Weber B.L."/>
            <person name="Chiew Y.-E."/>
            <person name="DeFazio A."/>
            <person name="Greaves M.F."/>
            <person name="Green A.R."/>
            <person name="Campbell P."/>
            <person name="Birney E."/>
            <person name="Easton D.F."/>
            <person name="Chenevix-Trench G."/>
            <person name="Tan M.-H."/>
            <person name="Khoo S.K."/>
            <person name="Teh B.T."/>
            <person name="Yuen S.T."/>
            <person name="Leung S.Y."/>
            <person name="Wooster R."/>
            <person name="Futreal P.A."/>
            <person name="Stratton M.R."/>
        </authorList>
    </citation>
    <scope>VARIANTS [LARGE SCALE ANALYSIS] VAL-188 AND LYS-208</scope>
</reference>
<reference key="35">
    <citation type="journal article" date="2009" name="J. Clin. Invest.">
        <title>Postreceptor insulin resistance contributes to human dyslipidemia and hepatic steatosis.</title>
        <authorList>
            <person name="Semple R.K."/>
            <person name="Sleigh A."/>
            <person name="Murgatroyd P.R."/>
            <person name="Adams C.A."/>
            <person name="Bluck L."/>
            <person name="Jackson S."/>
            <person name="Vottero A."/>
            <person name="Kanabar D."/>
            <person name="Charlton-Menys V."/>
            <person name="Durrington P."/>
            <person name="Soos M.A."/>
            <person name="Carpenter T.A."/>
            <person name="Lomas D.J."/>
            <person name="Cochran E.K."/>
            <person name="Gorden P."/>
            <person name="O'Rahilly S."/>
            <person name="Savage D.B."/>
        </authorList>
    </citation>
    <scope>VARIANT HIS-274</scope>
    <scope>INVOLVEMENT IN T2D</scope>
</reference>
<reference key="36">
    <citation type="journal article" date="2011" name="Science">
        <title>An activating mutation of AKT2 and human hypoglycemia.</title>
        <authorList>
            <person name="Hussain K."/>
            <person name="Challis B."/>
            <person name="Rocha N."/>
            <person name="Payne F."/>
            <person name="Minic M."/>
            <person name="Thompson A."/>
            <person name="Daly A."/>
            <person name="Scott C."/>
            <person name="Harris J."/>
            <person name="Smillie B.J."/>
            <person name="Savage D.B."/>
            <person name="Ramaswami U."/>
            <person name="De Lonlay P."/>
            <person name="O'Rahilly S."/>
            <person name="Barroso I."/>
            <person name="Semple R.K."/>
        </authorList>
    </citation>
    <scope>VARIANT HIHGHH LYS-17</scope>
</reference>
<sequence length="481" mass="55769">MNEVSVIKEGWLHKRGEYIKTWRPRYFLLKSDGSFIGYKERPEAPDQTLPPLNNFSVAECQLMKTERPRPNTFVIRCLQWTTVIERTFHVDSPDEREEWMRAIQMVANSLKQRAPGEDPMDYKCGSPSDSSTTEEMEVAVSKARAKVTMNDFDYLKLLGKGTFGKVILVREKATGRYYAMKILRKEVIIAKDEVAHTVTESRVLQNTRHPFLTALKYAFQTHDRLCFVMEYANGGELFFHLSRERVFTEERARFYGAEIVSALEYLHSRDVVYRDIKLENLMLDKDGHIKITDFGLCKEGISDGATMKTFCGTPEYLAPEVLEDNDYGRAVDWWGLGVVMYEMMCGRLPFYNQDHERLFELILMEEIRFPRTLSPEAKSLLAGLLKKDPKQRLGGGPSDAKEVMEHRFFLSINWQDVVQKKLLPPFKPQVTSEVDTRYFDDEFTAQSITITPPDRYDSLGLLELDQRTHFPQFSYSASIRE</sequence>
<organism>
    <name type="scientific">Homo sapiens</name>
    <name type="common">Human</name>
    <dbReference type="NCBI Taxonomy" id="9606"/>
    <lineage>
        <taxon>Eukaryota</taxon>
        <taxon>Metazoa</taxon>
        <taxon>Chordata</taxon>
        <taxon>Craniata</taxon>
        <taxon>Vertebrata</taxon>
        <taxon>Euteleostomi</taxon>
        <taxon>Mammalia</taxon>
        <taxon>Eutheria</taxon>
        <taxon>Euarchontoglires</taxon>
        <taxon>Primates</taxon>
        <taxon>Haplorrhini</taxon>
        <taxon>Catarrhini</taxon>
        <taxon>Hominidae</taxon>
        <taxon>Homo</taxon>
    </lineage>
</organism>
<proteinExistence type="evidence at protein level"/>
<name>AKT2_HUMAN</name>
<comment type="function">
    <text evidence="4 26 27 31 32">Serine/threonine kinase closely related to AKT1 and AKT3. All 3 enzymes, AKT1, AKT2 and AKT3, are collectively known as AKT kinase. AKT regulates many processes including metabolism, proliferation, cell survival, growth and angiogenesis, through the phosphorylation of a range of downstream substrates. Over 100 substrates have been reported so far, although for most of them, the precise AKT kinase catalyzing the reaction was not specified. AKT regulates glucose uptake by mediating insulin-induced translocation of the SLC2A4/GLUT4 glucose transporter to the cell surface. Phosphorylation of PTPN1 at 'Ser-50' negatively modulates its phosphatase activity preventing dephosphorylation of the insulin receptor and the attenuation of insulin signaling. Phosphorylation of TBC1D4 triggers the binding of this effector to inhibitory 14-3-3 proteins, which is required for insulin-stimulated glucose transport. AKT also regulates the storage of glucose in the form of glycogen by phosphorylating GSK3A at 'Ser-21' and GSK3B at 'Ser-9', resulting in inhibition of its kinase activity. Phosphorylation of GSK3 isoforms by AKT is also thought to be one mechanism by which cell proliferation is driven. AKT also regulates cell survival via the phosphorylation of MAP3K5 (apoptosis signal-related kinase). Phosphorylation of 'Ser-83' decreases MAP3K5 kinase activity stimulated by oxidative stress and thereby prevents apoptosis. AKT mediates insulin-stimulated protein synthesis by phosphorylating TSC2 at 'Ser-939' and 'Thr-1462', thereby activating mTORC1 signaling and leading to both phosphorylation of 4E-BP1 and in activation of RPS6KB1. AKT is involved in the phosphorylation of members of the FOXO factors (Forkhead family of transcription factors), leading to binding of 14-3-3 proteins and cytoplasmic localization. In particular, FOXO1 is phosphorylated at 'Thr-24', 'Ser-256' and 'Ser-319'. FOXO3 and FOXO4 are phosphorylated on equivalent sites. AKT has an important role in the regulation of NF-kappa-B-dependent gene transcription and positively regulates the activity of CREB1 (cyclic AMP (cAMP)-response element binding protein). The phosphorylation of CREB1 induces the binding of accessory proteins that are necessary for the transcription of pro-survival genes such as BCL2 and MCL1. AKT phosphorylates 'Ser-454' on ATP citrate lyase (ACLY), thereby potentially regulating ACLY activity and fatty acid synthesis. Activates the 3B isoform of cyclic nucleotide phosphodiesterase (PDE3B) via phosphorylation of 'Ser-273', resulting in reduced cyclic AMP levels and inhibition of lipolysis. Phosphorylates PIKFYVE on 'Ser-318', which results in increased PI(3)P-5 activity. The Rho GTPase-activating protein DLC1 is another substrate and its phosphorylation is implicated in the regulation cell proliferation and cell growth. AKT plays a role as key modulator of the AKT-mTOR signaling pathway controlling the tempo of the process of newborn neurons integration during adult neurogenesis, including correct neuron positioning, dendritic development and synapse formation. Signals downstream of phosphatidylinositol 3-kinase (PI(3)K) to mediate the effects of various growth factors such as platelet-derived growth factor (PDGF), epidermal growth factor (EGF), insulin and insulin-like growth factor 1 (IGF1). AKT mediates the antiapoptotic effects of IGF1. Essential for the SPATA13-mediated regulation of cell migration and adhesion assembly and disassembly. May be involved in the regulation of the placental development (PubMed:21432781, PubMed:21620960). In response to lysophosphatidic acid stimulation, inhibits the ciliogenesis cascade. In this context, phosphorylates WDR44, hence stabilizing its interaction with Rab11 and preventing the formation of the ciliogenic Rab11-FIP3-RAB3IP complex. Also phosphorylates RAB3IP/Rabin8, thus may affect RAB3IP guanine nucleotide exchange factor (GEF) activity toward Rab8, which is important for cilia growth (PubMed:31204173). Phosphorylates PKP1, facilitating its interaction with YWHAG and translocation to the nucleus, ultimately resulting in a reduction in keratinocyte intercellular adhesion (By similarity). Phosphorylation of PKP1 increases PKP1 protein stability, translocation to the cytoplasm away from desmosome plaques and PKP1-driven cap-dependent translation (PubMed:23444369).</text>
</comment>
<comment type="function">
    <text evidence="4">Several AKT2-specific substrates have been identified, including ANKRD2, C2CD5, CLK2 and PITX2. May play a role in myoblast differentiation. In this context, may act through PITX2 phosphorylation. Unphosphorylated PITX2 associates with an ELAVL1/HuR-containing complex, which stabilizes CCND1 cyclin mRNA, ensuring cell proliferation. Phosphorylation by AKT2 impairs this association, leading to CCND1 mRNA destabilization and progression towards differentiation (By similarity). Also involved in the negative regulation of myogenesis in response to stress conditions. In this context, acts by phosphorylating ANKRD2 (By similarity). May also be a key regulator of glucose uptake. Regulates insulin-stimulated glucose transport by the increase of glucose transporter GLUT4 translocation from intracellular stores to the plasma membrane. In this context, acts by phosphorylating C2CD5/CDP138 on 'Ser-197' in insulin-stimulated adipocytes (By similarity). Through the phosphorylation of CLK2 on 'Thr-343', involved in insulin-regulated suppression of hepatic gluconeogenesis (By similarity).</text>
</comment>
<comment type="catalytic activity">
    <reaction>
        <text>L-seryl-[protein] + ATP = O-phospho-L-seryl-[protein] + ADP + H(+)</text>
        <dbReference type="Rhea" id="RHEA:17989"/>
        <dbReference type="Rhea" id="RHEA-COMP:9863"/>
        <dbReference type="Rhea" id="RHEA-COMP:11604"/>
        <dbReference type="ChEBI" id="CHEBI:15378"/>
        <dbReference type="ChEBI" id="CHEBI:29999"/>
        <dbReference type="ChEBI" id="CHEBI:30616"/>
        <dbReference type="ChEBI" id="CHEBI:83421"/>
        <dbReference type="ChEBI" id="CHEBI:456216"/>
        <dbReference type="EC" id="2.7.11.1"/>
    </reaction>
    <physiologicalReaction direction="left-to-right" evidence="15 26 28">
        <dbReference type="Rhea" id="RHEA:17990"/>
    </physiologicalReaction>
</comment>
<comment type="catalytic activity">
    <reaction>
        <text>L-threonyl-[protein] + ATP = O-phospho-L-threonyl-[protein] + ADP + H(+)</text>
        <dbReference type="Rhea" id="RHEA:46608"/>
        <dbReference type="Rhea" id="RHEA-COMP:11060"/>
        <dbReference type="Rhea" id="RHEA-COMP:11605"/>
        <dbReference type="ChEBI" id="CHEBI:15378"/>
        <dbReference type="ChEBI" id="CHEBI:30013"/>
        <dbReference type="ChEBI" id="CHEBI:30616"/>
        <dbReference type="ChEBI" id="CHEBI:61977"/>
        <dbReference type="ChEBI" id="CHEBI:456216"/>
        <dbReference type="EC" id="2.7.11.1"/>
    </reaction>
    <physiologicalReaction direction="left-to-right" evidence="28">
        <dbReference type="Rhea" id="RHEA:46609"/>
    </physiologicalReaction>
</comment>
<comment type="activity regulation">
    <text evidence="3 19 21 26">Phosphorylation at Thr-309 (in the kinase domain) and Ser-474 (in the C-terminal regulatory region) is required for full activation (PubMed:18800763, PubMed:19179070). In adipocytes and hepatocytes, the activation is induced by insulin (By similarity). Aminofurazans, such as 4-[2-(4-amino-2,5-dihydro-1,2,5-oxadiazol-3-yl)-6-{[(1S)-3-amino-1-phenylpropyl]oxy}-1-ethyl-1H-imidazo[4,5-c]pyridin-4-yl]-2-methylbut-3-yn-2-ol (compound 32), are potent AKT2 inhibitors (PubMed:19179070). AKT2 phosphorylation of PKP1 is induced by insulin (PubMed:23444369).</text>
</comment>
<comment type="biophysicochemical properties">
    <kinetics>
        <KM evidence="15">358.4 uM for ATP (for purified and in vitro activated AKT2)</KM>
        <KM evidence="15">3.4 uM for peptide substrate (for purified and in vitro activated AKT2)</KM>
        <KM evidence="15">564 uM for ATP (for recombinant myristoylated AKT2 expressed in Rat-1 cells)</KM>
        <KM evidence="12">148 uM for ATP (for the isolated AKT2 catalytic fragment of 143-481)</KM>
        <KM evidence="15">2.3 uM for peptide substrate (for recombinant myristoylated AKT2 expressed in Rat-1 cells)</KM>
        <KM evidence="14">332 uM for Crosstide peptide substrate (for purified AKT2 in the absence of activation)</KM>
        <KM evidence="14">16 uM for Crosstide peptide substrate (for purified and in vitro activated AKT2)</KM>
    </kinetics>
</comment>
<comment type="subunit">
    <text evidence="4 9 11 16 18 22">Interacts with BTBD10 (By similarity). Interacts with KCTD20 (By similarity). Interacts (via PH domain) with MTCP1, TCL1A and TCL1B; this interaction may facilitate AKT2 oligomerization and phosphorylation, hence increasing kinase activity (PubMed:10983986). Interacts with PHB2; this interaction may be important for myogenic differentiation (By similarity). Interacts (when phosphorylated) with CLIP3/ClipR-59; this interaction promotes AKT2 recruitment to the plasma membrane (By similarity). Interacts with WDFY2/ProF (via WD repeats 1-3) (PubMed:16792529).</text>
</comment>
<comment type="interaction">
    <interactant intactId="EBI-296058">
        <id>P31751</id>
    </interactant>
    <interactant intactId="EBI-296087">
        <id>P31749</id>
        <label>AKT1</label>
    </interactant>
    <organismsDiffer>false</organismsDiffer>
    <experiments>3</experiments>
</comment>
<comment type="interaction">
    <interactant intactId="EBI-296058">
        <id>P31751</id>
    </interactant>
    <interactant intactId="EBI-373586">
        <id>P49841</id>
        <label>GSK3B</label>
    </interactant>
    <organismsDiffer>false</organismsDiffer>
    <experiments>2</experiments>
</comment>
<comment type="interaction">
    <interactant intactId="EBI-296058">
        <id>P31751</id>
    </interactant>
    <interactant intactId="EBI-352572">
        <id>P08238</id>
        <label>HSP90AB1</label>
    </interactant>
    <organismsDiffer>false</organismsDiffer>
    <experiments>2</experiments>
</comment>
<comment type="interaction">
    <interactant intactId="EBI-296058">
        <id>P31751</id>
    </interactant>
    <interactant intactId="EBI-16439278">
        <id>Q6FHY5</id>
        <label>MEOX2</label>
    </interactant>
    <organismsDiffer>false</organismsDiffer>
    <experiments>3</experiments>
</comment>
<comment type="interaction">
    <interactant intactId="EBI-296058">
        <id>P31751</id>
    </interactant>
    <interactant intactId="EBI-79165">
        <id>Q9NRD5</id>
        <label>PICK1</label>
    </interactant>
    <organismsDiffer>false</organismsDiffer>
    <experiments>3</experiments>
</comment>
<comment type="interaction">
    <interactant intactId="EBI-296058">
        <id>P31751</id>
    </interactant>
    <interactant intactId="EBI-10829018">
        <id>Q04864-2</id>
        <label>REL</label>
    </interactant>
    <organismsDiffer>false</organismsDiffer>
    <experiments>3</experiments>
</comment>
<comment type="interaction">
    <interactant intactId="EBI-296058">
        <id>P31751</id>
    </interactant>
    <interactant intactId="EBI-741237">
        <id>O60504</id>
        <label>SORBS3</label>
    </interactant>
    <organismsDiffer>false</organismsDiffer>
    <experiments>3</experiments>
</comment>
<comment type="interaction">
    <interactant intactId="EBI-296058">
        <id>P31751</id>
    </interactant>
    <interactant intactId="EBI-2681313">
        <id>P53804</id>
        <label>TTC3</label>
    </interactant>
    <organismsDiffer>false</organismsDiffer>
    <experiments>5</experiments>
</comment>
<comment type="interaction">
    <interactant intactId="EBI-296058">
        <id>P31751</id>
    </interactant>
    <interactant intactId="EBI-2339946">
        <id>Q9C0C9</id>
        <label>UBE2O</label>
    </interactant>
    <organismsDiffer>false</organismsDiffer>
    <experiments>4</experiments>
</comment>
<comment type="interaction">
    <interactant intactId="EBI-296058">
        <id>P31751</id>
    </interactant>
    <interactant intactId="EBI-353844">
        <id>P08670</id>
        <label>VIM</label>
    </interactant>
    <organismsDiffer>false</organismsDiffer>
    <experiments>6</experiments>
</comment>
<comment type="interaction">
    <interactant intactId="EBI-12562336">
        <id>P31751-1</id>
    </interactant>
    <interactant intactId="EBI-12562315">
        <id>Q15118-1</id>
        <label>PDK1</label>
    </interactant>
    <organismsDiffer>false</organismsDiffer>
    <experiments>2</experiments>
</comment>
<comment type="subcellular location">
    <subcellularLocation>
        <location evidence="18 26">Cytoplasm</location>
    </subcellularLocation>
    <subcellularLocation>
        <location evidence="18">Nucleus</location>
    </subcellularLocation>
    <subcellularLocation>
        <location>Cell membrane</location>
        <topology>Peripheral membrane protein</topology>
    </subcellularLocation>
    <subcellularLocation>
        <location evidence="4">Early endosome</location>
    </subcellularLocation>
    <text evidence="4 18">Through binding of the N-terminal PH domain to phosphatidylinositol (3,4,5)-trisphosphate (PtdIns(3,4,5)P3) or phosphatidylinositol (3,4)-bisphosphate (PtdIns(3,4)P2), recruited to the plasma membrane. Cell membrane recruitment is facilitated by interaction with CLIP3. Colocalizes with WDFY2 in early endosomes (By similarity). Localizes within both nucleus and cytoplasm in proliferative primary myoblasts and mostly within the nucleus of differentiated primary myoblasts (PubMed:17565718).</text>
</comment>
<comment type="alternative products">
    <event type="alternative splicing"/>
    <isoform>
        <id>P31751-1</id>
        <name>1</name>
        <sequence type="displayed"/>
    </isoform>
    <isoform>
        <id>P31751-2</id>
        <name>2</name>
        <sequence type="described" ref="VSP_056930"/>
    </isoform>
</comment>
<comment type="tissue specificity">
    <text evidence="18">Widely expressed. Expressed in myoblasts (PubMed:17565718).</text>
</comment>
<comment type="developmental stage">
    <text evidence="18">Up-regulated in in vitro differentiating primary myoblasts.</text>
</comment>
<comment type="domain">
    <text evidence="32 35">Binding of the PH domain to phosphatidylinositol 3,4,5-trisphosphate (PtdIns(3,4,5)P3) following phosphatidylinositol 3-kinase alpha (PIK3CA) activation results in AKT2 recruitment to the plasma membrane, exposition of a pair of serine and threonine residues for phosphorylation by membrane-associated PDPK1/PDK1 and activation.</text>
</comment>
<comment type="PTM">
    <text evidence="4 10 11 14 23 28">Phosphorylation on Thr-309 and Ser-474 is required for full activity (PubMed:12086620, PubMed:12434148, PubMed:15890450, PubMed:20059950). Phosphorylation of the activation loop at Thr-309 by PDPK1/PDK1 is a prerequisite for full activation (By similarity). Phosphorylated and activated by PDPK1/PDK1 in the presence of phosphatidylinositol 3,4,5-trisphosphate (PubMed:9512493). Phosphorylation by mTORC2 in response to growth factors plays a key role in AKT1 activation: mTORC2 phosphorylates different sites depending on the context, such as Ser-474 or Ser-478, thereby facilitating subsequent phosphorylation of the activation loop by PDPK1/PDK1 (By similarity).</text>
</comment>
<comment type="PTM">
    <text evidence="22 23">Ubiquitinated; undergoes both 'Lys-48'- and 'Lys-63'-linked polyubiquitination. TRAF6 catalyzes 'Lys-63'-linked AKT2 ubiquitination; this modification may be important for AKT2 recruitment to the plasma membrane and for AKT2 activating phosphorylation (PubMed:19713527). When phosphorylated, undergoes 'Lys-48'-polyubiquitination catalyzed by TTC3 in the nucleus, leading to its degradation by the proteasome (PubMed:20059950).</text>
</comment>
<comment type="PTM">
    <text evidence="1">O-GlcNAcylation at Thr-306 and Thr-313 inhibits activating phosphorylation at Thr-309 via the disruption of the interaction between AKT and PDPK1/PDK1.</text>
</comment>
<comment type="disease">
    <text evidence="24">Defects in AKT2 are a cause of susceptibility to breast cancer (BC). AKT2 promotes metastasis of tumor cells without affecting the latency of tumor development. May play a role in glioblastoma cell survival (PubMed:20167810).</text>
</comment>
<comment type="disease" evidence="13 20">
    <disease id="DI-02060">
        <name>Type 2 diabetes mellitus</name>
        <acronym>T2D</acronym>
        <description>A multifactorial disorder of glucose homeostasis caused by a lack of sensitivity to insulin. Affected individuals usually have an obese body habitus and manifestations of a metabolic syndrome characterized by diabetes, insulin resistance, hypertension and hypertriglyceridemia. The disease results in long-term complications that affect the eyes, kidneys, nerves, and blood vessels.</description>
        <dbReference type="MIM" id="125853"/>
    </disease>
    <text>Disease susceptibility is associated with variants affecting the gene represented in this entry.</text>
</comment>
<comment type="disease" evidence="25">
    <disease id="DI-03305">
        <name>Hypoinsulinemic hypoglycemia with hemihypertrophy</name>
        <acronym>HIHGHH</acronym>
        <description>A disorder characterized by hypoglycemia, low insulin levels, low serum levels of ketone bodies and branched-chain amino acids, left-sided hemihypertrophy, neonatal macrosomia, reduced consciousness and hypoglycemic seizures.</description>
        <dbReference type="MIM" id="240900"/>
    </disease>
    <text>The disease is caused by variants affecting the gene represented in this entry.</text>
</comment>
<comment type="similarity">
    <text evidence="34">Belongs to the protein kinase superfamily. AGC Ser/Thr protein kinase family. RAC subfamily.</text>
</comment>
<comment type="caution">
    <text evidence="34">In light of strong identity in the primary amino acid sequence, the 3 AKT kinases were long surmised to play redundant and overlapping roles. However, it is now known that each AKT may display specific functions in different cellular events and diseases. AKT1 is more specifically involved in cellular survival pathways, by inhibiting apoptotic processes; whereas AKT2 is more specific for the insulin receptor signaling pathway. Moreover, while AKT1 and AKT2 are often implicated in many aspects of cellular transformation, the 2 isoforms act in a complementary opposing manner. The role of AKT3 is less clear, though it appears to be predominantly expressed in brain.</text>
</comment>
<comment type="online information" name="Atlas of Genetics and Cytogenetics in Oncology and Haematology">
    <link uri="https://atlasgeneticsoncology.org/gene/517/AKT2"/>
</comment>
<feature type="chain" id="PRO_0000085608" description="RAC-beta serine/threonine-protein kinase">
    <location>
        <begin position="1"/>
        <end position="481"/>
    </location>
</feature>
<feature type="domain" description="PH" evidence="5">
    <location>
        <begin position="5"/>
        <end position="108"/>
    </location>
</feature>
<feature type="domain" description="Protein kinase" evidence="6">
    <location>
        <begin position="152"/>
        <end position="409"/>
    </location>
</feature>
<feature type="domain" description="AGC-kinase C-terminal" evidence="7">
    <location>
        <begin position="410"/>
        <end position="481"/>
    </location>
</feature>
<feature type="active site" description="Proton acceptor" evidence="6 8">
    <location>
        <position position="275"/>
    </location>
</feature>
<feature type="binding site" evidence="6">
    <location>
        <begin position="158"/>
        <end position="166"/>
    </location>
    <ligand>
        <name>ATP</name>
        <dbReference type="ChEBI" id="CHEBI:30616"/>
    </ligand>
</feature>
<feature type="binding site" evidence="6">
    <location>
        <position position="181"/>
    </location>
    <ligand>
        <name>ATP</name>
        <dbReference type="ChEBI" id="CHEBI:30616"/>
    </ligand>
</feature>
<feature type="binding site" evidence="11">
    <location>
        <position position="280"/>
    </location>
    <ligand>
        <name>Mn(2+)</name>
        <dbReference type="ChEBI" id="CHEBI:29035"/>
    </ligand>
</feature>
<feature type="binding site" evidence="11">
    <location>
        <position position="293"/>
    </location>
    <ligand>
        <name>Mn(2+)</name>
        <dbReference type="ChEBI" id="CHEBI:29035"/>
    </ligand>
</feature>
<feature type="modified residue" description="N-acetylmethionine" evidence="42">
    <location>
        <position position="1"/>
    </location>
</feature>
<feature type="modified residue" description="Phosphoserine" evidence="43 44">
    <location>
        <position position="34"/>
    </location>
</feature>
<feature type="modified residue" description="Phosphoserine" evidence="40 43">
    <location>
        <position position="126"/>
    </location>
</feature>
<feature type="modified residue" description="Phosphothreonine; by PDPK1" evidence="11 14 23 28">
    <location>
        <position position="309"/>
    </location>
</feature>
<feature type="modified residue" description="Phosphoserine" evidence="41">
    <location>
        <position position="447"/>
    </location>
</feature>
<feature type="modified residue" description="Phosphothreonine" evidence="41 44">
    <location>
        <position position="451"/>
    </location>
</feature>
<feature type="modified residue" description="Phosphoserine" evidence="14 23 41">
    <location>
        <position position="474"/>
    </location>
</feature>
<feature type="modified residue" description="Phosphoserine" evidence="41">
    <location>
        <position position="478"/>
    </location>
</feature>
<feature type="glycosylation site" description="O-linked (GlcNAc) serine" evidence="1">
    <location>
        <position position="128"/>
    </location>
</feature>
<feature type="glycosylation site" description="O-linked (GlcNAc) serine" evidence="1">
    <location>
        <position position="131"/>
    </location>
</feature>
<feature type="glycosylation site" description="O-linked (GlcNAc) threonine" evidence="1">
    <location>
        <position position="306"/>
    </location>
</feature>
<feature type="glycosylation site" description="O-linked (GlcNAc) threonine" evidence="1">
    <location>
        <position position="313"/>
    </location>
</feature>
<feature type="glycosylation site" description="O-linked (GlcNAc) serine; alternate" evidence="2">
    <location>
        <position position="474"/>
    </location>
</feature>
<feature type="disulfide bond" evidence="1">
    <location>
        <begin position="60"/>
        <end position="77"/>
    </location>
</feature>
<feature type="disulfide bond" evidence="12">
    <location>
        <begin position="297"/>
        <end position="311"/>
    </location>
</feature>
<feature type="splice variant" id="VSP_056930" description="In isoform 2." evidence="29">
    <location>
        <begin position="278"/>
        <end position="320"/>
    </location>
</feature>
<feature type="sequence variant" id="VAR_067309" description="In HIHGHH; exhibits plasma membrane localization in serum-starved cells and produced inappropriate tonic nuclear exclusion of FOXO1 in preadipocytes; dbSNP:rs387906659." evidence="25">
    <original>E</original>
    <variation>K</variation>
    <location>
        <position position="17"/>
    </location>
</feature>
<feature type="sequence variant" id="VAR_040356" description="In dbSNP:rs55859611." evidence="17">
    <original>I</original>
    <variation>V</variation>
    <location>
        <position position="188"/>
    </location>
</feature>
<feature type="sequence variant" id="VAR_040357" description="In dbSNP:rs35817154." evidence="17">
    <original>R</original>
    <variation>K</variation>
    <location>
        <position position="208"/>
    </location>
</feature>
<feature type="sequence variant" id="VAR_067310" description="Risk factor for T2D; typical metabolic dyslipidemia with elevated fastin triglyceride, high VLDL triglyceride/cholesterol ratios, low HDL cholesterol levels and high small dense LDL levels; de novo lipogenesis and liver fat are also significantly elevated; dbSNP:rs121434593." evidence="13 20">
    <original>R</original>
    <variation>H</variation>
    <location>
        <position position="274"/>
    </location>
</feature>
<feature type="mutagenesis site" description="Loss of kinase activity." evidence="14">
    <original>K</original>
    <variation>A</variation>
    <location>
        <position position="181"/>
    </location>
</feature>
<feature type="mutagenesis site" description="Impairs interaction with TTC3; when associated with A-474." evidence="23">
    <original>T</original>
    <variation>A</variation>
    <location>
        <position position="309"/>
    </location>
</feature>
<feature type="mutagenesis site" description="Constitutively active; when associated with D-474." evidence="14">
    <original>T</original>
    <variation>E</variation>
    <location>
        <position position="309"/>
    </location>
</feature>
<feature type="mutagenesis site" description="Impairs interaction with TTC3; when associated with A-309." evidence="23">
    <original>S</original>
    <variation>A</variation>
    <location>
        <position position="474"/>
    </location>
</feature>
<feature type="mutagenesis site" description="Constitutively active; when associated with E-309." evidence="14">
    <original>S</original>
    <variation>D</variation>
    <location>
        <position position="474"/>
    </location>
</feature>
<feature type="sequence conflict" description="In Ref. 1; AAA36585." evidence="34" ref="1">
    <original>SIRE</original>
    <variation>FREEKDLLMSLFVSLILFSDFSSLKSHSFSSNFILLSFSSLKK</variation>
    <location>
        <begin position="478"/>
        <end position="481"/>
    </location>
</feature>
<feature type="strand" evidence="54">
    <location>
        <begin position="6"/>
        <end position="15"/>
    </location>
</feature>
<feature type="strand" evidence="54">
    <location>
        <begin position="17"/>
        <end position="19"/>
    </location>
</feature>
<feature type="strand" evidence="54">
    <location>
        <begin position="22"/>
        <end position="30"/>
    </location>
</feature>
<feature type="strand" evidence="54">
    <location>
        <begin position="33"/>
        <end position="40"/>
    </location>
</feature>
<feature type="strand" evidence="48">
    <location>
        <begin position="45"/>
        <end position="47"/>
    </location>
</feature>
<feature type="helix" evidence="54">
    <location>
        <begin position="53"/>
        <end position="55"/>
    </location>
</feature>
<feature type="strand" evidence="48">
    <location>
        <begin position="58"/>
        <end position="60"/>
    </location>
</feature>
<feature type="strand" evidence="54">
    <location>
        <begin position="61"/>
        <end position="65"/>
    </location>
</feature>
<feature type="strand" evidence="54">
    <location>
        <begin position="67"/>
        <end position="79"/>
    </location>
</feature>
<feature type="strand" evidence="54">
    <location>
        <begin position="82"/>
        <end position="89"/>
    </location>
</feature>
<feature type="helix" evidence="54">
    <location>
        <begin position="93"/>
        <end position="117"/>
    </location>
</feature>
<feature type="helix" evidence="47">
    <location>
        <begin position="149"/>
        <end position="151"/>
    </location>
</feature>
<feature type="strand" evidence="47">
    <location>
        <begin position="152"/>
        <end position="160"/>
    </location>
</feature>
<feature type="strand" evidence="47">
    <location>
        <begin position="162"/>
        <end position="171"/>
    </location>
</feature>
<feature type="turn" evidence="47">
    <location>
        <begin position="172"/>
        <end position="174"/>
    </location>
</feature>
<feature type="strand" evidence="47">
    <location>
        <begin position="177"/>
        <end position="184"/>
    </location>
</feature>
<feature type="helix" evidence="47">
    <location>
        <begin position="185"/>
        <end position="190"/>
    </location>
</feature>
<feature type="helix" evidence="47">
    <location>
        <begin position="194"/>
        <end position="205"/>
    </location>
</feature>
<feature type="strand" evidence="47">
    <location>
        <begin position="215"/>
        <end position="220"/>
    </location>
</feature>
<feature type="strand" evidence="47">
    <location>
        <begin position="222"/>
        <end position="230"/>
    </location>
</feature>
<feature type="helix" evidence="47">
    <location>
        <begin position="237"/>
        <end position="244"/>
    </location>
</feature>
<feature type="helix" evidence="47">
    <location>
        <begin position="249"/>
        <end position="268"/>
    </location>
</feature>
<feature type="strand" evidence="47">
    <location>
        <begin position="280"/>
        <end position="283"/>
    </location>
</feature>
<feature type="strand" evidence="47">
    <location>
        <begin position="289"/>
        <end position="291"/>
    </location>
</feature>
<feature type="strand" evidence="51">
    <location>
        <begin position="298"/>
        <end position="300"/>
    </location>
</feature>
<feature type="strand" evidence="49">
    <location>
        <begin position="310"/>
        <end position="312"/>
    </location>
</feature>
<feature type="helix" evidence="47">
    <location>
        <begin position="314"/>
        <end position="316"/>
    </location>
</feature>
<feature type="helix" evidence="47">
    <location>
        <begin position="319"/>
        <end position="322"/>
    </location>
</feature>
<feature type="strand" evidence="47">
    <location>
        <begin position="323"/>
        <end position="325"/>
    </location>
</feature>
<feature type="helix" evidence="47">
    <location>
        <begin position="331"/>
        <end position="345"/>
    </location>
</feature>
<feature type="strand" evidence="45">
    <location>
        <begin position="351"/>
        <end position="353"/>
    </location>
</feature>
<feature type="helix" evidence="47">
    <location>
        <begin position="355"/>
        <end position="364"/>
    </location>
</feature>
<feature type="strand" evidence="46">
    <location>
        <begin position="371"/>
        <end position="373"/>
    </location>
</feature>
<feature type="helix" evidence="47">
    <location>
        <begin position="375"/>
        <end position="384"/>
    </location>
</feature>
<feature type="turn" evidence="47">
    <location>
        <begin position="389"/>
        <end position="391"/>
    </location>
</feature>
<feature type="turn" evidence="52">
    <location>
        <begin position="393"/>
        <end position="395"/>
    </location>
</feature>
<feature type="turn" evidence="47">
    <location>
        <begin position="397"/>
        <end position="399"/>
    </location>
</feature>
<feature type="helix" evidence="47">
    <location>
        <begin position="400"/>
        <end position="404"/>
    </location>
</feature>
<feature type="helix" evidence="47">
    <location>
        <begin position="407"/>
        <end position="409"/>
    </location>
</feature>
<feature type="helix" evidence="47">
    <location>
        <begin position="414"/>
        <end position="418"/>
    </location>
</feature>
<feature type="strand" evidence="50">
    <location>
        <begin position="431"/>
        <end position="434"/>
    </location>
</feature>
<feature type="helix" evidence="54">
    <location>
        <begin position="437"/>
        <end position="439"/>
    </location>
</feature>
<feature type="helix" evidence="47">
    <location>
        <begin position="441"/>
        <end position="444"/>
    </location>
</feature>
<feature type="turn" evidence="47">
    <location>
        <begin position="470"/>
        <end position="472"/>
    </location>
</feature>
<feature type="strand" evidence="53">
    <location>
        <begin position="474"/>
        <end position="476"/>
    </location>
</feature>
<feature type="turn" evidence="53">
    <location>
        <begin position="477"/>
        <end position="479"/>
    </location>
</feature>
<gene>
    <name evidence="36" type="primary">AKT2</name>
</gene>
<accession>P31751</accession>
<accession>B2RBD8</accession>
<accession>Q05BV0</accession>
<accession>Q0VAN0</accession>
<accession>Q0VAN1</accession>
<accession>Q68GC0</accession>
<protein>
    <recommendedName>
        <fullName>RAC-beta serine/threonine-protein kinase</fullName>
        <ecNumber evidence="12 14 15 26 28">2.7.11.1</ecNumber>
    </recommendedName>
    <alternativeName>
        <fullName>Protein kinase Akt-2</fullName>
    </alternativeName>
    <alternativeName>
        <fullName>Protein kinase B beta</fullName>
        <shortName evidence="33">PKB beta</shortName>
    </alternativeName>
    <alternativeName>
        <fullName evidence="30">RAC protein kinase beta</fullName>
        <shortName>RAC-PK-beta</shortName>
    </alternativeName>
</protein>
<evidence type="ECO:0000250" key="1">
    <source>
        <dbReference type="UniProtKB" id="P31749"/>
    </source>
</evidence>
<evidence type="ECO:0000250" key="2">
    <source>
        <dbReference type="UniProtKB" id="P31750"/>
    </source>
</evidence>
<evidence type="ECO:0000250" key="3">
    <source>
        <dbReference type="UniProtKB" id="P47197"/>
    </source>
</evidence>
<evidence type="ECO:0000250" key="4">
    <source>
        <dbReference type="UniProtKB" id="Q60823"/>
    </source>
</evidence>
<evidence type="ECO:0000255" key="5">
    <source>
        <dbReference type="PROSITE-ProRule" id="PRU00145"/>
    </source>
</evidence>
<evidence type="ECO:0000255" key="6">
    <source>
        <dbReference type="PROSITE-ProRule" id="PRU00159"/>
    </source>
</evidence>
<evidence type="ECO:0000255" key="7">
    <source>
        <dbReference type="PROSITE-ProRule" id="PRU00618"/>
    </source>
</evidence>
<evidence type="ECO:0000255" key="8">
    <source>
        <dbReference type="PROSITE-ProRule" id="PRU10027"/>
    </source>
</evidence>
<evidence type="ECO:0000269" key="9">
    <source>
    </source>
</evidence>
<evidence type="ECO:0000269" key="10">
    <source>
    </source>
</evidence>
<evidence type="ECO:0000269" key="11">
    <source>
    </source>
</evidence>
<evidence type="ECO:0000269" key="12">
    <source>
    </source>
</evidence>
<evidence type="ECO:0000269" key="13">
    <source>
    </source>
</evidence>
<evidence type="ECO:0000269" key="14">
    <source>
    </source>
</evidence>
<evidence type="ECO:0000269" key="15">
    <source>
    </source>
</evidence>
<evidence type="ECO:0000269" key="16">
    <source>
    </source>
</evidence>
<evidence type="ECO:0000269" key="17">
    <source>
    </source>
</evidence>
<evidence type="ECO:0000269" key="18">
    <source>
    </source>
</evidence>
<evidence type="ECO:0000269" key="19">
    <source>
    </source>
</evidence>
<evidence type="ECO:0000269" key="20">
    <source>
    </source>
</evidence>
<evidence type="ECO:0000269" key="21">
    <source>
    </source>
</evidence>
<evidence type="ECO:0000269" key="22">
    <source>
    </source>
</evidence>
<evidence type="ECO:0000269" key="23">
    <source>
    </source>
</evidence>
<evidence type="ECO:0000269" key="24">
    <source>
    </source>
</evidence>
<evidence type="ECO:0000269" key="25">
    <source>
    </source>
</evidence>
<evidence type="ECO:0000269" key="26">
    <source>
    </source>
</evidence>
<evidence type="ECO:0000269" key="27">
    <source>
    </source>
</evidence>
<evidence type="ECO:0000269" key="28">
    <source>
    </source>
</evidence>
<evidence type="ECO:0000303" key="29">
    <source>
    </source>
</evidence>
<evidence type="ECO:0000303" key="30">
    <source>
    </source>
</evidence>
<evidence type="ECO:0000303" key="31">
    <source>
    </source>
</evidence>
<evidence type="ECO:0000303" key="32">
    <source>
    </source>
</evidence>
<evidence type="ECO:0000303" key="33">
    <source>
    </source>
</evidence>
<evidence type="ECO:0000305" key="34"/>
<evidence type="ECO:0000305" key="35">
    <source>
    </source>
</evidence>
<evidence type="ECO:0000312" key="36">
    <source>
        <dbReference type="HGNC" id="HGNC:392"/>
    </source>
</evidence>
<evidence type="ECO:0007744" key="37">
    <source>
        <dbReference type="PDB" id="3E87"/>
    </source>
</evidence>
<evidence type="ECO:0007744" key="38">
    <source>
        <dbReference type="PDB" id="3E88"/>
    </source>
</evidence>
<evidence type="ECO:0007744" key="39">
    <source>
        <dbReference type="PDB" id="3E8D"/>
    </source>
</evidence>
<evidence type="ECO:0007744" key="40">
    <source>
    </source>
</evidence>
<evidence type="ECO:0007744" key="41">
    <source>
    </source>
</evidence>
<evidence type="ECO:0007744" key="42">
    <source>
    </source>
</evidence>
<evidence type="ECO:0007744" key="43">
    <source>
    </source>
</evidence>
<evidence type="ECO:0007744" key="44">
    <source>
    </source>
</evidence>
<evidence type="ECO:0007829" key="45">
    <source>
        <dbReference type="PDB" id="1GZK"/>
    </source>
</evidence>
<evidence type="ECO:0007829" key="46">
    <source>
        <dbReference type="PDB" id="1GZN"/>
    </source>
</evidence>
<evidence type="ECO:0007829" key="47">
    <source>
        <dbReference type="PDB" id="1O6L"/>
    </source>
</evidence>
<evidence type="ECO:0007829" key="48">
    <source>
        <dbReference type="PDB" id="1P6S"/>
    </source>
</evidence>
<evidence type="ECO:0007829" key="49">
    <source>
        <dbReference type="PDB" id="2JDO"/>
    </source>
</evidence>
<evidence type="ECO:0007829" key="50">
    <source>
        <dbReference type="PDB" id="2JDR"/>
    </source>
</evidence>
<evidence type="ECO:0007829" key="51">
    <source>
        <dbReference type="PDB" id="2UW9"/>
    </source>
</evidence>
<evidence type="ECO:0007829" key="52">
    <source>
        <dbReference type="PDB" id="2X39"/>
    </source>
</evidence>
<evidence type="ECO:0007829" key="53">
    <source>
        <dbReference type="PDB" id="3D0E"/>
    </source>
</evidence>
<evidence type="ECO:0007829" key="54">
    <source>
        <dbReference type="PDB" id="9C1W"/>
    </source>
</evidence>
<keyword id="KW-0002">3D-structure</keyword>
<keyword id="KW-0007">Acetylation</keyword>
<keyword id="KW-0025">Alternative splicing</keyword>
<keyword id="KW-0053">Apoptosis</keyword>
<keyword id="KW-0067">ATP-binding</keyword>
<keyword id="KW-0119">Carbohydrate metabolism</keyword>
<keyword id="KW-1003">Cell membrane</keyword>
<keyword id="KW-0963">Cytoplasm</keyword>
<keyword id="KW-0217">Developmental protein</keyword>
<keyword id="KW-0219">Diabetes mellitus</keyword>
<keyword id="KW-0225">Disease variant</keyword>
<keyword id="KW-1015">Disulfide bond</keyword>
<keyword id="KW-0967">Endosome</keyword>
<keyword id="KW-0313">Glucose metabolism</keyword>
<keyword id="KW-0320">Glycogen biosynthesis</keyword>
<keyword id="KW-0321">Glycogen metabolism</keyword>
<keyword id="KW-0325">Glycoprotein</keyword>
<keyword id="KW-0418">Kinase</keyword>
<keyword id="KW-0464">Manganese</keyword>
<keyword id="KW-0472">Membrane</keyword>
<keyword id="KW-0479">Metal-binding</keyword>
<keyword id="KW-0547">Nucleotide-binding</keyword>
<keyword id="KW-0539">Nucleus</keyword>
<keyword id="KW-0597">Phosphoprotein</keyword>
<keyword id="KW-1267">Proteomics identification</keyword>
<keyword id="KW-0656">Proto-oncogene</keyword>
<keyword id="KW-1185">Reference proteome</keyword>
<keyword id="KW-0723">Serine/threonine-protein kinase</keyword>
<keyword id="KW-0762">Sugar transport</keyword>
<keyword id="KW-0808">Transferase</keyword>
<keyword id="KW-0810">Translation regulation</keyword>
<keyword id="KW-0813">Transport</keyword>
<keyword id="KW-0832">Ubl conjugation</keyword>
<dbReference type="EC" id="2.7.11.1" evidence="12 14 15 26 28"/>
<dbReference type="EMBL" id="M77198">
    <property type="protein sequence ID" value="AAA36585.1"/>
    <property type="molecule type" value="mRNA"/>
</dbReference>
<dbReference type="EMBL" id="M95936">
    <property type="protein sequence ID" value="AAA58364.1"/>
    <property type="molecule type" value="mRNA"/>
</dbReference>
<dbReference type="EMBL" id="AK314619">
    <property type="protein sequence ID" value="BAG37185.1"/>
    <property type="molecule type" value="mRNA"/>
</dbReference>
<dbReference type="EMBL" id="AC118344">
    <property type="status" value="NOT_ANNOTATED_CDS"/>
    <property type="molecule type" value="Genomic_DNA"/>
</dbReference>
<dbReference type="EMBL" id="BC032709">
    <property type="protein sequence ID" value="AAH32709.1"/>
    <property type="molecule type" value="mRNA"/>
</dbReference>
<dbReference type="EMBL" id="BC120995">
    <property type="protein sequence ID" value="AAI20996.1"/>
    <property type="molecule type" value="mRNA"/>
</dbReference>
<dbReference type="EMBL" id="BC120994">
    <property type="protein sequence ID" value="AAI20995.1"/>
    <property type="molecule type" value="mRNA"/>
</dbReference>
<dbReference type="EMBL" id="AY708392">
    <property type="protein sequence ID" value="AAT97984.1"/>
    <property type="molecule type" value="Genomic_DNA"/>
</dbReference>
<dbReference type="CCDS" id="CCDS12552.1">
    <molecule id="P31751-1"/>
</dbReference>
<dbReference type="CCDS" id="CCDS82350.1">
    <molecule id="P31751-2"/>
</dbReference>
<dbReference type="PIR" id="A46288">
    <property type="entry name" value="A46288"/>
</dbReference>
<dbReference type="RefSeq" id="NP_001317440.1">
    <molecule id="P31751-2"/>
    <property type="nucleotide sequence ID" value="NM_001330511.1"/>
</dbReference>
<dbReference type="RefSeq" id="NP_001617.1">
    <molecule id="P31751-1"/>
    <property type="nucleotide sequence ID" value="NM_001626.6"/>
</dbReference>
<dbReference type="RefSeq" id="XP_011524916.1">
    <property type="nucleotide sequence ID" value="XM_011526614.1"/>
</dbReference>
<dbReference type="RefSeq" id="XP_011524917.1">
    <property type="nucleotide sequence ID" value="XM_011526615.1"/>
</dbReference>
<dbReference type="RefSeq" id="XP_011524918.1">
    <property type="nucleotide sequence ID" value="XM_011526616.1"/>
</dbReference>
<dbReference type="RefSeq" id="XP_011524920.1">
    <property type="nucleotide sequence ID" value="XM_011526618.1"/>
</dbReference>
<dbReference type="RefSeq" id="XP_011524921.1">
    <property type="nucleotide sequence ID" value="XM_011526619.1"/>
</dbReference>
<dbReference type="RefSeq" id="XP_011524922.1">
    <property type="nucleotide sequence ID" value="XM_011526620.1"/>
</dbReference>
<dbReference type="RefSeq" id="XP_016881959.1">
    <property type="nucleotide sequence ID" value="XM_017026470.1"/>
</dbReference>
<dbReference type="PDB" id="1GZK">
    <property type="method" value="X-ray"/>
    <property type="resolution" value="2.30 A"/>
    <property type="chains" value="A=146-460"/>
</dbReference>
<dbReference type="PDB" id="1GZN">
    <property type="method" value="X-ray"/>
    <property type="resolution" value="2.50 A"/>
    <property type="chains" value="A=146-480"/>
</dbReference>
<dbReference type="PDB" id="1GZO">
    <property type="method" value="X-ray"/>
    <property type="resolution" value="2.75 A"/>
    <property type="chains" value="A=146-460"/>
</dbReference>
<dbReference type="PDB" id="1MRV">
    <property type="method" value="X-ray"/>
    <property type="resolution" value="2.80 A"/>
    <property type="chains" value="A=143-481"/>
</dbReference>
<dbReference type="PDB" id="1MRY">
    <property type="method" value="X-ray"/>
    <property type="resolution" value="2.80 A"/>
    <property type="chains" value="A=143-481"/>
</dbReference>
<dbReference type="PDB" id="1O6K">
    <property type="method" value="X-ray"/>
    <property type="resolution" value="1.70 A"/>
    <property type="chains" value="A=146-481"/>
</dbReference>
<dbReference type="PDB" id="1O6L">
    <property type="method" value="X-ray"/>
    <property type="resolution" value="1.60 A"/>
    <property type="chains" value="A=146-467"/>
</dbReference>
<dbReference type="PDB" id="1P6S">
    <property type="method" value="NMR"/>
    <property type="chains" value="A=1-111"/>
</dbReference>
<dbReference type="PDB" id="2JDO">
    <property type="method" value="X-ray"/>
    <property type="resolution" value="1.80 A"/>
    <property type="chains" value="A=146-467"/>
</dbReference>
<dbReference type="PDB" id="2JDR">
    <property type="method" value="X-ray"/>
    <property type="resolution" value="2.30 A"/>
    <property type="chains" value="A=146-467"/>
</dbReference>
<dbReference type="PDB" id="2UW9">
    <property type="method" value="X-ray"/>
    <property type="resolution" value="2.10 A"/>
    <property type="chains" value="A=146-467"/>
</dbReference>
<dbReference type="PDB" id="2X39">
    <property type="method" value="X-ray"/>
    <property type="resolution" value="1.93 A"/>
    <property type="chains" value="A=146-467"/>
</dbReference>
<dbReference type="PDB" id="2XH5">
    <property type="method" value="X-ray"/>
    <property type="resolution" value="2.72 A"/>
    <property type="chains" value="A=146-479"/>
</dbReference>
<dbReference type="PDB" id="3D0E">
    <property type="method" value="X-ray"/>
    <property type="resolution" value="2.00 A"/>
    <property type="chains" value="A/B=146-480"/>
</dbReference>
<dbReference type="PDB" id="3E87">
    <property type="method" value="X-ray"/>
    <property type="resolution" value="2.30 A"/>
    <property type="chains" value="A/B=146-480"/>
</dbReference>
<dbReference type="PDB" id="3E88">
    <property type="method" value="X-ray"/>
    <property type="resolution" value="2.50 A"/>
    <property type="chains" value="A/B=146-480"/>
</dbReference>
<dbReference type="PDB" id="3E8D">
    <property type="method" value="X-ray"/>
    <property type="resolution" value="2.70 A"/>
    <property type="chains" value="A/B=146-480"/>
</dbReference>
<dbReference type="PDB" id="8Q61">
    <property type="method" value="X-ray"/>
    <property type="resolution" value="2.32 A"/>
    <property type="chains" value="A=1-481"/>
</dbReference>
<dbReference type="PDB" id="9C1W">
    <property type="method" value="X-ray"/>
    <property type="resolution" value="2.00 A"/>
    <property type="chains" value="A=2-447"/>
</dbReference>
<dbReference type="PDBsum" id="1GZK"/>
<dbReference type="PDBsum" id="1GZN"/>
<dbReference type="PDBsum" id="1GZO"/>
<dbReference type="PDBsum" id="1MRV"/>
<dbReference type="PDBsum" id="1MRY"/>
<dbReference type="PDBsum" id="1O6K"/>
<dbReference type="PDBsum" id="1O6L"/>
<dbReference type="PDBsum" id="1P6S"/>
<dbReference type="PDBsum" id="2JDO"/>
<dbReference type="PDBsum" id="2JDR"/>
<dbReference type="PDBsum" id="2UW9"/>
<dbReference type="PDBsum" id="2X39"/>
<dbReference type="PDBsum" id="2XH5"/>
<dbReference type="PDBsum" id="3D0E"/>
<dbReference type="PDBsum" id="3E87"/>
<dbReference type="PDBsum" id="3E88"/>
<dbReference type="PDBsum" id="3E8D"/>
<dbReference type="PDBsum" id="8Q61"/>
<dbReference type="PDBsum" id="9C1W"/>
<dbReference type="BMRB" id="P31751"/>
<dbReference type="SMR" id="P31751"/>
<dbReference type="BioGRID" id="106711">
    <property type="interactions" value="134"/>
</dbReference>
<dbReference type="CORUM" id="P31751"/>
<dbReference type="DIP" id="DIP-32583N"/>
<dbReference type="ELM" id="P31751"/>
<dbReference type="FunCoup" id="P31751">
    <property type="interactions" value="3395"/>
</dbReference>
<dbReference type="IntAct" id="P31751">
    <property type="interactions" value="55"/>
</dbReference>
<dbReference type="MINT" id="P31751"/>
<dbReference type="STRING" id="9606.ENSP00000375892"/>
<dbReference type="BindingDB" id="P31751"/>
<dbReference type="ChEMBL" id="CHEMBL2431"/>
<dbReference type="DrugBank" id="DB08073">
    <property type="generic name" value="(2S)-1-(1H-INDOL-3-YL)-3-{[5-(3-METHYL-1H-INDAZOL-5-YL)PYRIDIN-3-YL]OXY}PROPAN-2-AMINE"/>
</dbReference>
<dbReference type="DrugBank" id="DB07859">
    <property type="generic name" value="4-(4-CHLOROPHENYL)-4-[4-(1H-PYRAZOL-4-YL)PHENYL]PIPERIDINE"/>
</dbReference>
<dbReference type="DrugBank" id="DB12218">
    <property type="generic name" value="Capivasertib"/>
</dbReference>
<dbReference type="DrugBank" id="DB07947">
    <property type="generic name" value="ISOQUINOLINE-5-SULFONIC ACID (2-(2-(4-CHLOROBENZYLOXY)ETHYLAMINO)ETHYL)AMIDE"/>
</dbReference>
<dbReference type="DrugBank" id="DB07812">
    <property type="generic name" value="N-[(1S)-2-amino-1-phenylethyl]-5-(1H-pyrrolo[2,3-b]pyridin-4-yl)thiophene-2-carboxamide"/>
</dbReference>
<dbReference type="DrugCentral" id="P31751"/>
<dbReference type="GuidetoPHARMACOLOGY" id="1480"/>
<dbReference type="GlyCosmos" id="P31751">
    <property type="glycosylation" value="4 sites, No reported glycans"/>
</dbReference>
<dbReference type="GlyGen" id="P31751">
    <property type="glycosylation" value="5 sites, 1 O-linked glycan (1 site)"/>
</dbReference>
<dbReference type="iPTMnet" id="P31751"/>
<dbReference type="PhosphoSitePlus" id="P31751"/>
<dbReference type="BioMuta" id="AKT2"/>
<dbReference type="DMDM" id="1170703"/>
<dbReference type="CPTAC" id="CPTAC-2822"/>
<dbReference type="CPTAC" id="CPTAC-3117"/>
<dbReference type="CPTAC" id="CPTAC-3119"/>
<dbReference type="CPTAC" id="CPTAC-3159"/>
<dbReference type="CPTAC" id="CPTAC-3160"/>
<dbReference type="CPTAC" id="CPTAC-3161"/>
<dbReference type="CPTAC" id="CPTAC-5757"/>
<dbReference type="CPTAC" id="CPTAC-5801"/>
<dbReference type="CPTAC" id="CPTAC-5802"/>
<dbReference type="CPTAC" id="CPTAC-5803"/>
<dbReference type="CPTAC" id="CPTAC-5804"/>
<dbReference type="CPTAC" id="CPTAC-788"/>
<dbReference type="CPTAC" id="CPTAC-789"/>
<dbReference type="CPTAC" id="non-CPTAC-5334"/>
<dbReference type="CPTAC" id="non-CPTAC-5335"/>
<dbReference type="CPTAC" id="non-CPTAC-5336"/>
<dbReference type="CPTAC" id="non-CPTAC-5338"/>
<dbReference type="CPTAC" id="non-CPTAC-5339"/>
<dbReference type="CPTAC" id="non-CPTAC-5529"/>
<dbReference type="CPTAC" id="non-CPTAC-5717"/>
<dbReference type="CPTAC" id="non-CPTAC-5718"/>
<dbReference type="jPOST" id="P31751"/>
<dbReference type="MassIVE" id="P31751"/>
<dbReference type="PaxDb" id="9606-ENSP00000375892"/>
<dbReference type="PeptideAtlas" id="P31751"/>
<dbReference type="ProteomicsDB" id="54801">
    <molecule id="P31751-1"/>
</dbReference>
<dbReference type="ProteomicsDB" id="58804"/>
<dbReference type="Pumba" id="P31751"/>
<dbReference type="Antibodypedia" id="3775">
    <property type="antibodies" value="1663 antibodies from 49 providers"/>
</dbReference>
<dbReference type="CPTC" id="P31751">
    <property type="antibodies" value="6 antibodies"/>
</dbReference>
<dbReference type="DNASU" id="208"/>
<dbReference type="Ensembl" id="ENST00000311278.10">
    <molecule id="P31751-2"/>
    <property type="protein sequence ID" value="ENSP00000309428.6"/>
    <property type="gene ID" value="ENSG00000105221.18"/>
</dbReference>
<dbReference type="Ensembl" id="ENST00000392038.7">
    <molecule id="P31751-1"/>
    <property type="protein sequence ID" value="ENSP00000375892.2"/>
    <property type="gene ID" value="ENSG00000105221.18"/>
</dbReference>
<dbReference type="Ensembl" id="ENST00000424901.5">
    <molecule id="P31751-2"/>
    <property type="protein sequence ID" value="ENSP00000399532.2"/>
    <property type="gene ID" value="ENSG00000105221.18"/>
</dbReference>
<dbReference type="GeneID" id="208"/>
<dbReference type="KEGG" id="hsa:208"/>
<dbReference type="MANE-Select" id="ENST00000392038.7">
    <property type="protein sequence ID" value="ENSP00000375892.2"/>
    <property type="RefSeq nucleotide sequence ID" value="NM_001626.6"/>
    <property type="RefSeq protein sequence ID" value="NP_001617.1"/>
</dbReference>
<dbReference type="UCSC" id="uc002onf.3">
    <molecule id="P31751-1"/>
    <property type="organism name" value="human"/>
</dbReference>
<dbReference type="AGR" id="HGNC:392"/>
<dbReference type="CTD" id="208"/>
<dbReference type="DisGeNET" id="208"/>
<dbReference type="GeneCards" id="AKT2"/>
<dbReference type="HGNC" id="HGNC:392">
    <property type="gene designation" value="AKT2"/>
</dbReference>
<dbReference type="HPA" id="ENSG00000105221">
    <property type="expression patterns" value="Low tissue specificity"/>
</dbReference>
<dbReference type="MalaCards" id="AKT2"/>
<dbReference type="MIM" id="125853">
    <property type="type" value="phenotype"/>
</dbReference>
<dbReference type="MIM" id="164731">
    <property type="type" value="gene"/>
</dbReference>
<dbReference type="MIM" id="240900">
    <property type="type" value="phenotype"/>
</dbReference>
<dbReference type="neXtProt" id="NX_P31751"/>
<dbReference type="OpenTargets" id="ENSG00000105221"/>
<dbReference type="Orphanet" id="79085">
    <property type="disease" value="AKT2-related familial partial lipodystrophy"/>
</dbReference>
<dbReference type="Orphanet" id="293964">
    <property type="disease" value="Hypoinsulinemic hypoglycemia and body hemihypertrophy"/>
</dbReference>
<dbReference type="PharmGKB" id="PA24685"/>
<dbReference type="VEuPathDB" id="HostDB:ENSG00000105221"/>
<dbReference type="eggNOG" id="KOG0690">
    <property type="taxonomic scope" value="Eukaryota"/>
</dbReference>
<dbReference type="GeneTree" id="ENSGT00940000157189"/>
<dbReference type="InParanoid" id="P31751"/>
<dbReference type="OrthoDB" id="63267at2759"/>
<dbReference type="PAN-GO" id="P31751">
    <property type="GO annotations" value="3 GO annotations based on evolutionary models"/>
</dbReference>
<dbReference type="PhylomeDB" id="P31751"/>
<dbReference type="TreeFam" id="TF102004"/>
<dbReference type="BRENDA" id="2.7.11.1">
    <property type="organism ID" value="2681"/>
</dbReference>
<dbReference type="PathwayCommons" id="P31751"/>
<dbReference type="Reactome" id="R-HSA-111447">
    <property type="pathway name" value="Activation of BAD and translocation to mitochondria"/>
</dbReference>
<dbReference type="Reactome" id="R-HSA-1257604">
    <property type="pathway name" value="PIP3 activates AKT signaling"/>
</dbReference>
<dbReference type="Reactome" id="R-HSA-1358803">
    <property type="pathway name" value="Downregulation of ERBB2:ERBB3 signaling"/>
</dbReference>
<dbReference type="Reactome" id="R-HSA-1445148">
    <property type="pathway name" value="Translocation of SLC2A4 (GLUT4) to the plasma membrane"/>
</dbReference>
<dbReference type="Reactome" id="R-HSA-165158">
    <property type="pathway name" value="Activation of AKT2"/>
</dbReference>
<dbReference type="Reactome" id="R-HSA-165160">
    <property type="pathway name" value="PDE3B signalling"/>
</dbReference>
<dbReference type="Reactome" id="R-HSA-165181">
    <property type="pathway name" value="Inhibition of TSC complex formation by PKB"/>
</dbReference>
<dbReference type="Reactome" id="R-HSA-198323">
    <property type="pathway name" value="AKT phosphorylates targets in the cytosol"/>
</dbReference>
<dbReference type="Reactome" id="R-HSA-198693">
    <property type="pathway name" value="AKT phosphorylates targets in the nucleus"/>
</dbReference>
<dbReference type="Reactome" id="R-HSA-199418">
    <property type="pathway name" value="Negative regulation of the PI3K/AKT network"/>
</dbReference>
<dbReference type="Reactome" id="R-HSA-211163">
    <property type="pathway name" value="AKT-mediated inactivation of FOXO1A"/>
</dbReference>
<dbReference type="Reactome" id="R-HSA-3769402">
    <property type="pathway name" value="Deactivation of the beta-catenin transactivating complex"/>
</dbReference>
<dbReference type="Reactome" id="R-HSA-389357">
    <property type="pathway name" value="CD28 dependent PI3K/Akt signaling"/>
</dbReference>
<dbReference type="Reactome" id="R-HSA-389513">
    <property type="pathway name" value="Co-inhibition by CTLA4"/>
</dbReference>
<dbReference type="Reactome" id="R-HSA-392451">
    <property type="pathway name" value="G beta:gamma signalling through PI3Kgamma"/>
</dbReference>
<dbReference type="Reactome" id="R-HSA-5218920">
    <property type="pathway name" value="VEGFR2 mediated vascular permeability"/>
</dbReference>
<dbReference type="Reactome" id="R-HSA-5628897">
    <property type="pathway name" value="TP53 Regulates Metabolic Genes"/>
</dbReference>
<dbReference type="Reactome" id="R-HSA-5674400">
    <property type="pathway name" value="Constitutive Signaling by AKT1 E17K in Cancer"/>
</dbReference>
<dbReference type="Reactome" id="R-HSA-6804757">
    <property type="pathway name" value="Regulation of TP53 Degradation"/>
</dbReference>
<dbReference type="Reactome" id="R-HSA-6804758">
    <property type="pathway name" value="Regulation of TP53 Activity through Acetylation"/>
</dbReference>
<dbReference type="Reactome" id="R-HSA-6804759">
    <property type="pathway name" value="Regulation of TP53 Activity through Association with Co-factors"/>
</dbReference>
<dbReference type="Reactome" id="R-HSA-69202">
    <property type="pathway name" value="Cyclin E associated events during G1/S transition"/>
</dbReference>
<dbReference type="Reactome" id="R-HSA-69656">
    <property type="pathway name" value="Cyclin A:Cdk2-associated events at S phase entry"/>
</dbReference>
<dbReference type="Reactome" id="R-HSA-8876198">
    <property type="pathway name" value="RAB GEFs exchange GTP for GDP on RABs"/>
</dbReference>
<dbReference type="Reactome" id="R-HSA-8941332">
    <property type="pathway name" value="RUNX2 regulates genes involved in cell migration"/>
</dbReference>
<dbReference type="Reactome" id="R-HSA-8948751">
    <property type="pathway name" value="Regulation of PTEN stability and activity"/>
</dbReference>
<dbReference type="Reactome" id="R-HSA-9607240">
    <property type="pathway name" value="FLT3 Signaling"/>
</dbReference>
<dbReference type="Reactome" id="R-HSA-9614399">
    <property type="pathway name" value="Regulation of localization of FOXO transcription factors"/>
</dbReference>
<dbReference type="Reactome" id="R-HSA-9634638">
    <property type="pathway name" value="Estrogen-dependent nuclear events downstream of ESR-membrane signaling"/>
</dbReference>
<dbReference type="Reactome" id="R-HSA-9755511">
    <property type="pathway name" value="KEAP1-NFE2L2 pathway"/>
</dbReference>
<dbReference type="Reactome" id="R-HSA-9755779">
    <property type="pathway name" value="SARS-CoV-2 targets host intracellular signalling and regulatory pathways"/>
</dbReference>
<dbReference type="Reactome" id="R-HSA-9824585">
    <property type="pathway name" value="Regulation of MITF-M-dependent genes involved in pigmentation"/>
</dbReference>
<dbReference type="SABIO-RK" id="P31751"/>
<dbReference type="SignaLink" id="P31751"/>
<dbReference type="SIGNOR" id="P31751"/>
<dbReference type="BioGRID-ORCS" id="208">
    <property type="hits" value="39 hits in 1204 CRISPR screens"/>
</dbReference>
<dbReference type="ChiTaRS" id="AKT2">
    <property type="organism name" value="human"/>
</dbReference>
<dbReference type="EvolutionaryTrace" id="P31751"/>
<dbReference type="GeneWiki" id="AKT2"/>
<dbReference type="GenomeRNAi" id="208"/>
<dbReference type="Pharos" id="P31751">
    <property type="development level" value="Tchem"/>
</dbReference>
<dbReference type="PRO" id="PR:P31751"/>
<dbReference type="Proteomes" id="UP000005640">
    <property type="component" value="Chromosome 19"/>
</dbReference>
<dbReference type="RNAct" id="P31751">
    <property type="molecule type" value="protein"/>
</dbReference>
<dbReference type="Bgee" id="ENSG00000105221">
    <property type="expression patterns" value="Expressed in right uterine tube and 178 other cell types or tissues"/>
</dbReference>
<dbReference type="ExpressionAtlas" id="P31751">
    <property type="expression patterns" value="baseline and differential"/>
</dbReference>
<dbReference type="GO" id="GO:0005938">
    <property type="term" value="C:cell cortex"/>
    <property type="evidence" value="ECO:0000250"/>
    <property type="project" value="UniProtKB"/>
</dbReference>
<dbReference type="GO" id="GO:0005737">
    <property type="term" value="C:cytoplasm"/>
    <property type="evidence" value="ECO:0000314"/>
    <property type="project" value="UniProtKB"/>
</dbReference>
<dbReference type="GO" id="GO:0005829">
    <property type="term" value="C:cytosol"/>
    <property type="evidence" value="ECO:0000314"/>
    <property type="project" value="HPA"/>
</dbReference>
<dbReference type="GO" id="GO:0005769">
    <property type="term" value="C:early endosome"/>
    <property type="evidence" value="ECO:0007669"/>
    <property type="project" value="UniProtKB-SubCell"/>
</dbReference>
<dbReference type="GO" id="GO:0043231">
    <property type="term" value="C:intracellular membrane-bounded organelle"/>
    <property type="evidence" value="ECO:0000314"/>
    <property type="project" value="HPA"/>
</dbReference>
<dbReference type="GO" id="GO:0005654">
    <property type="term" value="C:nucleoplasm"/>
    <property type="evidence" value="ECO:0000314"/>
    <property type="project" value="HPA"/>
</dbReference>
<dbReference type="GO" id="GO:0005634">
    <property type="term" value="C:nucleus"/>
    <property type="evidence" value="ECO:0000314"/>
    <property type="project" value="UniProtKB"/>
</dbReference>
<dbReference type="GO" id="GO:0005886">
    <property type="term" value="C:plasma membrane"/>
    <property type="evidence" value="ECO:0000250"/>
    <property type="project" value="UniProtKB"/>
</dbReference>
<dbReference type="GO" id="GO:0032587">
    <property type="term" value="C:ruffle membrane"/>
    <property type="evidence" value="ECO:0000250"/>
    <property type="project" value="UniProtKB"/>
</dbReference>
<dbReference type="GO" id="GO:0005524">
    <property type="term" value="F:ATP binding"/>
    <property type="evidence" value="ECO:0000314"/>
    <property type="project" value="UniProtKB"/>
</dbReference>
<dbReference type="GO" id="GO:0046872">
    <property type="term" value="F:metal ion binding"/>
    <property type="evidence" value="ECO:0007669"/>
    <property type="project" value="UniProtKB-KW"/>
</dbReference>
<dbReference type="GO" id="GO:0140677">
    <property type="term" value="F:molecular function activator activity"/>
    <property type="evidence" value="ECO:0000269"/>
    <property type="project" value="DisProt"/>
</dbReference>
<dbReference type="GO" id="GO:0106310">
    <property type="term" value="F:protein serine kinase activity"/>
    <property type="evidence" value="ECO:0007669"/>
    <property type="project" value="RHEA"/>
</dbReference>
<dbReference type="GO" id="GO:0004674">
    <property type="term" value="F:protein serine/threonine kinase activity"/>
    <property type="evidence" value="ECO:0000314"/>
    <property type="project" value="UniProtKB"/>
</dbReference>
<dbReference type="GO" id="GO:0071486">
    <property type="term" value="P:cellular response to high light intensity"/>
    <property type="evidence" value="ECO:0007669"/>
    <property type="project" value="Ensembl"/>
</dbReference>
<dbReference type="GO" id="GO:0032869">
    <property type="term" value="P:cellular response to insulin stimulus"/>
    <property type="evidence" value="ECO:0000315"/>
    <property type="project" value="BHF-UCL"/>
</dbReference>
<dbReference type="GO" id="GO:0045444">
    <property type="term" value="P:fat cell differentiation"/>
    <property type="evidence" value="ECO:0000304"/>
    <property type="project" value="UniProtKB"/>
</dbReference>
<dbReference type="GO" id="GO:0006006">
    <property type="term" value="P:glucose metabolic process"/>
    <property type="evidence" value="ECO:0007669"/>
    <property type="project" value="UniProtKB-KW"/>
</dbReference>
<dbReference type="GO" id="GO:0005978">
    <property type="term" value="P:glycogen biosynthetic process"/>
    <property type="evidence" value="ECO:0007669"/>
    <property type="project" value="UniProtKB-KW"/>
</dbReference>
<dbReference type="GO" id="GO:0008286">
    <property type="term" value="P:insulin receptor signaling pathway"/>
    <property type="evidence" value="ECO:0000315"/>
    <property type="project" value="BHF-UCL"/>
</dbReference>
<dbReference type="GO" id="GO:0035556">
    <property type="term" value="P:intracellular signal transduction"/>
    <property type="evidence" value="ECO:0000318"/>
    <property type="project" value="GO_Central"/>
</dbReference>
<dbReference type="GO" id="GO:0060644">
    <property type="term" value="P:mammary gland epithelial cell differentiation"/>
    <property type="evidence" value="ECO:0000304"/>
    <property type="project" value="UniProtKB"/>
</dbReference>
<dbReference type="GO" id="GO:0010748">
    <property type="term" value="P:negative regulation of long-chain fatty acid import across plasma membrane"/>
    <property type="evidence" value="ECO:0000315"/>
    <property type="project" value="BHF-UCL"/>
</dbReference>
<dbReference type="GO" id="GO:1903898">
    <property type="term" value="P:negative regulation of PERK-mediated unfolded protein response"/>
    <property type="evidence" value="ECO:0007669"/>
    <property type="project" value="Ensembl"/>
</dbReference>
<dbReference type="GO" id="GO:0032287">
    <property type="term" value="P:peripheral nervous system myelin maintenance"/>
    <property type="evidence" value="ECO:0007669"/>
    <property type="project" value="Ensembl"/>
</dbReference>
<dbReference type="GO" id="GO:1903676">
    <property type="term" value="P:positive regulation of cap-dependent translational initiation"/>
    <property type="evidence" value="ECO:0000315"/>
    <property type="project" value="UniProtKB"/>
</dbReference>
<dbReference type="GO" id="GO:0030335">
    <property type="term" value="P:positive regulation of cell migration"/>
    <property type="evidence" value="ECO:0000314"/>
    <property type="project" value="BHF-UCL"/>
</dbReference>
<dbReference type="GO" id="GO:2000147">
    <property type="term" value="P:positive regulation of cell motility"/>
    <property type="evidence" value="ECO:0000315"/>
    <property type="project" value="BHF-UCL"/>
</dbReference>
<dbReference type="GO" id="GO:0046326">
    <property type="term" value="P:positive regulation of D-glucose import"/>
    <property type="evidence" value="ECO:0000315"/>
    <property type="project" value="BHF-UCL"/>
</dbReference>
<dbReference type="GO" id="GO:0032000">
    <property type="term" value="P:positive regulation of fatty acid beta-oxidation"/>
    <property type="evidence" value="ECO:0000315"/>
    <property type="project" value="BHF-UCL"/>
</dbReference>
<dbReference type="GO" id="GO:0010907">
    <property type="term" value="P:positive regulation of glucose metabolic process"/>
    <property type="evidence" value="ECO:0000315"/>
    <property type="project" value="BHF-UCL"/>
</dbReference>
<dbReference type="GO" id="GO:0045725">
    <property type="term" value="P:positive regulation of glycogen biosynthetic process"/>
    <property type="evidence" value="ECO:0000315"/>
    <property type="project" value="BHF-UCL"/>
</dbReference>
<dbReference type="GO" id="GO:0090314">
    <property type="term" value="P:positive regulation of protein targeting to membrane"/>
    <property type="evidence" value="ECO:0000250"/>
    <property type="project" value="UniProtKB"/>
</dbReference>
<dbReference type="GO" id="GO:0072659">
    <property type="term" value="P:protein localization to plasma membrane"/>
    <property type="evidence" value="ECO:0007669"/>
    <property type="project" value="Ensembl"/>
</dbReference>
<dbReference type="GO" id="GO:0036211">
    <property type="term" value="P:protein modification process"/>
    <property type="evidence" value="ECO:0000304"/>
    <property type="project" value="ProtInc"/>
</dbReference>
<dbReference type="GO" id="GO:0050821">
    <property type="term" value="P:protein stabilization"/>
    <property type="evidence" value="ECO:0000315"/>
    <property type="project" value="UniProtKB"/>
</dbReference>
<dbReference type="GO" id="GO:0051726">
    <property type="term" value="P:regulation of cell cycle"/>
    <property type="evidence" value="ECO:0000304"/>
    <property type="project" value="UniProtKB"/>
</dbReference>
<dbReference type="GO" id="GO:0030334">
    <property type="term" value="P:regulation of cell migration"/>
    <property type="evidence" value="ECO:0000304"/>
    <property type="project" value="UniProtKB"/>
</dbReference>
<dbReference type="GO" id="GO:0097473">
    <property type="term" value="P:retinal rod cell apoptotic process"/>
    <property type="evidence" value="ECO:0007669"/>
    <property type="project" value="Ensembl"/>
</dbReference>
<dbReference type="GO" id="GO:0007165">
    <property type="term" value="P:signal transduction"/>
    <property type="evidence" value="ECO:0000304"/>
    <property type="project" value="UniProtKB"/>
</dbReference>
<dbReference type="CDD" id="cd01241">
    <property type="entry name" value="PH_PKB"/>
    <property type="match status" value="1"/>
</dbReference>
<dbReference type="CDD" id="cd05595">
    <property type="entry name" value="STKc_PKB_beta"/>
    <property type="match status" value="1"/>
</dbReference>
<dbReference type="DisProt" id="DP00304"/>
<dbReference type="FunFam" id="1.10.510.10:FF:000033">
    <property type="entry name" value="Non-specific serine/threonine protein kinase"/>
    <property type="match status" value="1"/>
</dbReference>
<dbReference type="FunFam" id="2.30.29.30:FF:000027">
    <property type="entry name" value="Non-specific serine/threonine protein kinase"/>
    <property type="match status" value="1"/>
</dbReference>
<dbReference type="FunFam" id="3.30.200.20:FF:000838">
    <property type="entry name" value="Non-specific serine/threonine protein kinase"/>
    <property type="match status" value="1"/>
</dbReference>
<dbReference type="Gene3D" id="3.30.200.20">
    <property type="entry name" value="Phosphorylase Kinase, domain 1"/>
    <property type="match status" value="1"/>
</dbReference>
<dbReference type="Gene3D" id="2.30.29.30">
    <property type="entry name" value="Pleckstrin-homology domain (PH domain)/Phosphotyrosine-binding domain (PTB)"/>
    <property type="match status" value="1"/>
</dbReference>
<dbReference type="Gene3D" id="1.10.510.10">
    <property type="entry name" value="Transferase(Phosphotransferase) domain 1"/>
    <property type="match status" value="1"/>
</dbReference>
<dbReference type="IDEAL" id="IID00037"/>
<dbReference type="InterPro" id="IPR000961">
    <property type="entry name" value="AGC-kinase_C"/>
</dbReference>
<dbReference type="InterPro" id="IPR034677">
    <property type="entry name" value="Akt2"/>
</dbReference>
<dbReference type="InterPro" id="IPR011009">
    <property type="entry name" value="Kinase-like_dom_sf"/>
</dbReference>
<dbReference type="InterPro" id="IPR011993">
    <property type="entry name" value="PH-like_dom_sf"/>
</dbReference>
<dbReference type="InterPro" id="IPR001849">
    <property type="entry name" value="PH_domain"/>
</dbReference>
<dbReference type="InterPro" id="IPR039026">
    <property type="entry name" value="PH_PKB"/>
</dbReference>
<dbReference type="InterPro" id="IPR017892">
    <property type="entry name" value="Pkinase_C"/>
</dbReference>
<dbReference type="InterPro" id="IPR000719">
    <property type="entry name" value="Prot_kinase_dom"/>
</dbReference>
<dbReference type="InterPro" id="IPR017441">
    <property type="entry name" value="Protein_kinase_ATP_BS"/>
</dbReference>
<dbReference type="InterPro" id="IPR008271">
    <property type="entry name" value="Ser/Thr_kinase_AS"/>
</dbReference>
<dbReference type="PANTHER" id="PTHR24351">
    <property type="entry name" value="RIBOSOMAL PROTEIN S6 KINASE"/>
    <property type="match status" value="1"/>
</dbReference>
<dbReference type="Pfam" id="PF00169">
    <property type="entry name" value="PH"/>
    <property type="match status" value="1"/>
</dbReference>
<dbReference type="Pfam" id="PF00069">
    <property type="entry name" value="Pkinase"/>
    <property type="match status" value="1"/>
</dbReference>
<dbReference type="Pfam" id="PF00433">
    <property type="entry name" value="Pkinase_C"/>
    <property type="match status" value="1"/>
</dbReference>
<dbReference type="SMART" id="SM00233">
    <property type="entry name" value="PH"/>
    <property type="match status" value="1"/>
</dbReference>
<dbReference type="SMART" id="SM00133">
    <property type="entry name" value="S_TK_X"/>
    <property type="match status" value="1"/>
</dbReference>
<dbReference type="SMART" id="SM00220">
    <property type="entry name" value="S_TKc"/>
    <property type="match status" value="1"/>
</dbReference>
<dbReference type="SUPFAM" id="SSF50729">
    <property type="entry name" value="PH domain-like"/>
    <property type="match status" value="1"/>
</dbReference>
<dbReference type="SUPFAM" id="SSF56112">
    <property type="entry name" value="Protein kinase-like (PK-like)"/>
    <property type="match status" value="1"/>
</dbReference>
<dbReference type="PROSITE" id="PS51285">
    <property type="entry name" value="AGC_KINASE_CTER"/>
    <property type="match status" value="1"/>
</dbReference>
<dbReference type="PROSITE" id="PS50003">
    <property type="entry name" value="PH_DOMAIN"/>
    <property type="match status" value="1"/>
</dbReference>
<dbReference type="PROSITE" id="PS00107">
    <property type="entry name" value="PROTEIN_KINASE_ATP"/>
    <property type="match status" value="1"/>
</dbReference>
<dbReference type="PROSITE" id="PS50011">
    <property type="entry name" value="PROTEIN_KINASE_DOM"/>
    <property type="match status" value="1"/>
</dbReference>
<dbReference type="PROSITE" id="PS00108">
    <property type="entry name" value="PROTEIN_KINASE_ST"/>
    <property type="match status" value="1"/>
</dbReference>